<keyword id="KW-0002">3D-structure</keyword>
<keyword id="KW-0094">Blood coagulation</keyword>
<keyword id="KW-0106">Calcium</keyword>
<keyword id="KW-0165">Cleavage on pair of basic residues</keyword>
<keyword id="KW-0903">Direct protein sequencing</keyword>
<keyword id="KW-0225">Disease variant</keyword>
<keyword id="KW-1015">Disulfide bond</keyword>
<keyword id="KW-0245">EGF-like domain</keyword>
<keyword id="KW-0301">Gamma-carboxyglutamic acid</keyword>
<keyword id="KW-0325">Glycoprotein</keyword>
<keyword id="KW-0356">Hemostasis</keyword>
<keyword id="KW-0378">Hydrolase</keyword>
<keyword id="KW-0379">Hydroxylation</keyword>
<keyword id="KW-0645">Protease</keyword>
<keyword id="KW-1267">Proteomics identification</keyword>
<keyword id="KW-1185">Reference proteome</keyword>
<keyword id="KW-0677">Repeat</keyword>
<keyword id="KW-0964">Secreted</keyword>
<keyword id="KW-0720">Serine protease</keyword>
<keyword id="KW-0732">Signal</keyword>
<keyword id="KW-0865">Zymogen</keyword>
<protein>
    <recommendedName>
        <fullName>Coagulation factor X</fullName>
        <ecNumber>3.4.21.6</ecNumber>
    </recommendedName>
    <alternativeName>
        <fullName>Stuart factor</fullName>
    </alternativeName>
    <alternativeName>
        <fullName>Stuart-Prower factor</fullName>
    </alternativeName>
    <component>
        <recommendedName>
            <fullName>Factor X light chain</fullName>
        </recommendedName>
    </component>
    <component>
        <recommendedName>
            <fullName>Factor X heavy chain</fullName>
        </recommendedName>
    </component>
    <component>
        <recommendedName>
            <fullName>Activated factor Xa heavy chain</fullName>
        </recommendedName>
    </component>
</protein>
<reference key="1">
    <citation type="journal article" date="1991" name="Gene">
        <title>Cloning and expression in COS-1 cells of a full-length cDNA encoding human coagulation factor X.</title>
        <authorList>
            <person name="Messier T.L."/>
            <person name="Pittman D.D."/>
            <person name="Long G.L."/>
            <person name="Kaufman R.J."/>
            <person name="Church W.R."/>
        </authorList>
    </citation>
    <scope>NUCLEOTIDE SEQUENCE [MRNA]</scope>
</reference>
<reference key="2">
    <citation type="journal article" date="1986" name="Biochemistry">
        <title>Gene for human factor X: a blood coagulation factor whose gene organization is essentially identical with that of factor IX and protein C.</title>
        <authorList>
            <person name="Leytus S.P."/>
            <person name="Foster D.C."/>
            <person name="Kurachi K."/>
            <person name="Davie E.W."/>
        </authorList>
    </citation>
    <scope>NUCLEOTIDE SEQUENCE [GENOMIC DNA]</scope>
</reference>
<reference key="3">
    <citation type="submission" date="2002-04" db="EMBL/GenBank/DDBJ databases">
        <authorList>
            <consortium name="SeattleSNPs variation discovery resource"/>
        </authorList>
    </citation>
    <scope>NUCLEOTIDE SEQUENCE [GENOMIC DNA]</scope>
    <scope>VARIANTS THR-152 AND ARG-192</scope>
</reference>
<reference key="4">
    <citation type="journal article" date="2004" name="Genome Res.">
        <title>The status, quality, and expansion of the NIH full-length cDNA project: the Mammalian Gene Collection (MGC).</title>
        <authorList>
            <consortium name="The MGC Project Team"/>
        </authorList>
    </citation>
    <scope>NUCLEOTIDE SEQUENCE [LARGE SCALE MRNA]</scope>
    <source>
        <tissue>Ovary</tissue>
    </source>
</reference>
<reference key="5">
    <citation type="journal article" date="1985" name="Proc. Natl. Acad. Sci. U.S.A.">
        <title>Characterization of an almost full-length cDNA coding for human blood coagulation factor X.</title>
        <authorList>
            <person name="Fung M.R."/>
            <person name="Hay C.W."/>
            <person name="McGillivray R.T.A."/>
        </authorList>
    </citation>
    <scope>NUCLEOTIDE SEQUENCE [MRNA] OF 13-488</scope>
</reference>
<reference key="6">
    <citation type="journal article" date="1986" name="Gene">
        <title>Isolation and characterization of human blood-coagulation factor X cDNA.</title>
        <authorList>
            <person name="Kaul R.K."/>
            <person name="Hildebrand B."/>
            <person name="Roberts S."/>
            <person name="Jagadeeswaran P."/>
        </authorList>
    </citation>
    <scope>NUCLEOTIDE SEQUENCE [MRNA] OF 19-488</scope>
    <source>
        <tissue>Liver</tissue>
    </source>
</reference>
<reference key="7">
    <citation type="journal article" date="1983" name="Biochemistry">
        <title>Complete amino acid sequence of the light chain of human blood coagulation factor X: evidence for identification of residue 63 as beta-hydroxyaspartic acid.</title>
        <authorList>
            <person name="McMullen B.A."/>
            <person name="Fujikawa K."/>
            <person name="Kisiel W."/>
            <person name="Sasagawa T."/>
            <person name="Howald W.N."/>
            <person name="Kwa E.Y."/>
            <person name="Weinstein B."/>
        </authorList>
    </citation>
    <scope>PROTEIN SEQUENCE OF 41-179</scope>
    <scope>HYDROXYLATION AT ASP-103</scope>
    <scope>GAMMA-CARBOXYGLUTAMATION AT GLU-46; GLU-47; GLU-54; GLU-56; GLU-59; GLU-60; GLU-65; GLU-66; GLU-69; GLU-72 AND GLU-79</scope>
</reference>
<reference key="8">
    <citation type="journal article" date="1984" name="Proc. Natl. Acad. Sci. U.S.A.">
        <title>Characterization of a cDNA coding for human factor X.</title>
        <authorList>
            <person name="Leytus S.P."/>
            <person name="Chung D.W."/>
            <person name="Kisiel W."/>
            <person name="Kurachi K."/>
            <person name="Davie E.W."/>
        </authorList>
    </citation>
    <scope>NUCLEOTIDE SEQUENCE [MRNA] OF 115-488</scope>
    <scope>TISSUE SPECIFICITY</scope>
    <source>
        <tissue>Liver</tissue>
    </source>
</reference>
<reference key="9">
    <citation type="journal article" date="1993" name="Eur. J. Biochem.">
        <title>Identification of O-linked oligosaccharide chains in the activation peptides of blood coagulation factor X. The role of the carbohydrate moieties in the activation of factor X.</title>
        <authorList>
            <person name="Inoue K."/>
            <person name="Morita T."/>
        </authorList>
    </citation>
    <scope>PROTEIN SEQUENCE OF 183-234</scope>
    <scope>GLYCOSYLATION AT THR-199; THR-211; ASN-221 AND ASN-231</scope>
</reference>
<reference key="10">
    <citation type="journal article" date="1989" name="Gene">
        <title>Cloning and characterization of the 5' end (exon 1) of the gene encoding human factor X.</title>
        <authorList>
            <person name="Jagadeeswaran P."/>
            <person name="Reddy S.V."/>
            <person name="Rao K.J."/>
            <person name="Hamsabhushanam K."/>
            <person name="Lyman G."/>
        </authorList>
    </citation>
    <scope>NUCLEOTIDE SEQUENCE [GENOMIC DNA] OF 1-23</scope>
</reference>
<reference key="11">
    <citation type="journal article" date="1984" name="J. Biochem.">
        <title>Mechanism of inhibition of activated protein C by protein C inhibitor.</title>
        <authorList>
            <person name="Suzuki K."/>
            <person name="Nishioka J."/>
            <person name="Kusumoto H."/>
            <person name="Hashimoto S."/>
        </authorList>
    </citation>
    <scope>ACTIVITY REGULATION</scope>
    <scope>HETERODIMER WITH SERPINA5</scope>
</reference>
<reference key="12">
    <citation type="journal article" date="1996" name="Biochem. J.">
        <title>Activation of Mac-1 (CD11b/CD18)-bound factor X by released cathepsin G defines an alternative pathway of leucocyte initiation of coagulation.</title>
        <authorList>
            <person name="Plescia J."/>
            <person name="Altieri D.C."/>
        </authorList>
    </citation>
    <scope>PROTEOLYTIC CLEAVAGE</scope>
</reference>
<reference key="13">
    <citation type="journal article" date="1998" name="J. Immunol.">
        <title>Factor Xa induces cytokine production and expression of adhesion molecules by human umbilical vein endothelial cells.</title>
        <authorList>
            <person name="Senden N.H."/>
            <person name="Jeunhomme T.M."/>
            <person name="Heemskerk J.W."/>
            <person name="Wagenvoord R."/>
            <person name="van't Veer C."/>
            <person name="Hemker H.C."/>
            <person name="Buurman W.A."/>
        </authorList>
    </citation>
    <scope>FUNCTION</scope>
</reference>
<reference key="14">
    <citation type="journal article" date="2002" name="Blood">
        <title>Ixolaris, a novel recombinant tissue factor pathway inhibitor (TFPI) from the salivary gland of the tick, Ixodes scapularis: identification of factor X and factor Xa as scaffolds for the inhibition of factor VIIa/tissue factor complex.</title>
        <authorList>
            <person name="Francischetti I.M."/>
            <person name="Valenzuela J.G."/>
            <person name="Andersen J.F."/>
            <person name="Mather T.N."/>
            <person name="Ribeiro J.M."/>
        </authorList>
    </citation>
    <scope>INTERACTION WITH TICK IXOLARIS</scope>
</reference>
<reference key="15">
    <citation type="journal article" date="2006" name="Thromb. Haemost.">
        <title>Antithrombotic properties of Ixolaris, a potent inhibitor of the extrinsic pathway of the coagulation cascade.</title>
        <authorList>
            <person name="Nazareth R.A."/>
            <person name="Tomaz L.S."/>
            <person name="Ortiz-Costa S."/>
            <person name="Atella G.C."/>
            <person name="Ribeiro J.M."/>
            <person name="Francischetti I.M."/>
            <person name="Monteiro R.Q."/>
        </authorList>
    </citation>
    <scope>INTERACTION WITH TICK IXOLARIS</scope>
</reference>
<reference evidence="52" key="16">
    <citation type="journal article" date="2008" name="Am. J. Pathol.">
        <title>Factor Xa stimulates proinflammatory and profibrotic responses in fibroblasts via protease-activated receptor-2 activation.</title>
        <authorList>
            <person name="Borensztajn K."/>
            <person name="Stiekema J."/>
            <person name="Nijmeijer S."/>
            <person name="Reitsma P.H."/>
            <person name="Peppelenbosch M.P."/>
            <person name="Spek C.A."/>
        </authorList>
    </citation>
    <scope>FUNCTION</scope>
</reference>
<reference key="17">
    <citation type="journal article" date="2012" name="Biochemistry">
        <title>Identification of exosite residues of factor Xa involved in recognition of PAR-2 on endothelial cells.</title>
        <authorList>
            <person name="Manithody C."/>
            <person name="Yang L."/>
            <person name="Rezaie A.R."/>
        </authorList>
    </citation>
    <scope>FUNCTION</scope>
    <scope>MUTAGENESIS OF GLU-255; GLU-256; GLU-258; LYS-282; ARG-283; GLU-306; LYS-310; GLU-345; GLU-350; ARG-366; ARG-372; ARG-376; ARG-387 AND LYS-391</scope>
</reference>
<reference key="18">
    <citation type="journal article" date="2008" name="Protein Sci.">
        <title>Ixolaris binding to factor X reveals a precursor state of factor Xa heparin-binding exosite.</title>
        <authorList>
            <person name="Monteiro R.Q."/>
            <person name="Rezaie A.R."/>
            <person name="Bae J.S."/>
            <person name="Calvo E."/>
            <person name="Andersen J.F."/>
            <person name="Francischetti I.M."/>
        </authorList>
    </citation>
    <scope>INTERACTION WITH TICK IXOLARIS</scope>
</reference>
<reference key="19">
    <citation type="journal article" date="2010" name="J. Biol. Chem.">
        <title>Basis for the specificity and activation of the serpin protein Z-dependent proteinase inhibitor (ZPI) as an inhibitor of membrane-associated factor Xa.</title>
        <authorList>
            <person name="Huang X."/>
            <person name="Dementiev A."/>
            <person name="Olson S.T."/>
            <person name="Gettins P.G."/>
        </authorList>
    </citation>
    <scope>ACTIVITY REGULATION</scope>
</reference>
<reference key="20">
    <citation type="journal article" date="2011" name="J. Biol. Chem.">
        <title>Alboserpin, a factor Xa inhibitor from the mosquito vector of yellow fever, binds heparin and membrane phospholipids and exhibits antithrombotic activity.</title>
        <authorList>
            <person name="Calvo E."/>
            <person name="Mizurini D.M."/>
            <person name="Sa-Nunes A."/>
            <person name="Ribeiro J.M."/>
            <person name="Andersen J.F."/>
            <person name="Mans B.J."/>
            <person name="Monteiro R.Q."/>
            <person name="Kotsyfakis M."/>
            <person name="Francischetti I.M."/>
        </authorList>
    </citation>
    <scope>INTERACTION WITH MOSQUITO FXA-DIRECTED ANTICOAGULANT</scope>
</reference>
<reference key="21">
    <citation type="journal article" date="2012" name="Mol. Cell. Proteomics">
        <title>Human urinary glycoproteomics; attachment site specific analysis of N- and O-linked glycosylations by CID and ECD.</title>
        <authorList>
            <person name="Halim A."/>
            <person name="Nilsson J."/>
            <person name="Ruetschi U."/>
            <person name="Hesse C."/>
            <person name="Larson G."/>
        </authorList>
    </citation>
    <scope>GLYCOSYLATION</scope>
    <scope>STRUCTURE OF CARBOHYDRATES</scope>
    <scope>IDENTIFICATION BY MASS SPECTROMETRY</scope>
</reference>
<reference evidence="52" key="22">
    <citation type="journal article" date="2012" name="PLoS ONE">
        <title>Simukunin from the salivary glands of the black fly Simulium vittatum inhibits enzymes that regulate clotting and inflammatory responses.</title>
        <authorList>
            <person name="Tsujimoto H."/>
            <person name="Kotsyfakis M."/>
            <person name="Francischetti I.M."/>
            <person name="Eum J.H."/>
            <person name="Strand M.R."/>
            <person name="Champagne D.E."/>
        </authorList>
    </citation>
    <scope>INTERACTION WITH BLACK FLY SIMUKUNIN</scope>
</reference>
<reference key="23">
    <citation type="journal article" date="2013" name="Eur. J. Pharmacol.">
        <title>Coagulation factor Xa induces an inflammatory signalling by activation of protease-activated receptors in human atrial tissue.</title>
        <authorList>
            <person name="Bukowska A."/>
            <person name="Zacharias I."/>
            <person name="Weinert S."/>
            <person name="Skopp K."/>
            <person name="Hartmann C."/>
            <person name="Huth C."/>
            <person name="Goette A."/>
        </authorList>
    </citation>
    <scope>FUNCTION</scope>
</reference>
<reference key="24">
    <citation type="journal article" date="2018" name="Front. Pharmacol.">
        <title>TAK-442, a Direct Factor Xa Inhibitor, Inhibits Monocyte Chemoattractant Protein 1 Production in Endothelial Cells via Involvement of Protease-Activated Receptor 1.</title>
        <authorList>
            <person name="Shinozawa E."/>
            <person name="Nakayama M."/>
            <person name="Imura Y."/>
        </authorList>
    </citation>
    <scope>FUNCTION</scope>
</reference>
<reference key="25">
    <citation type="journal article" date="2019" name="Blood">
        <title>NMR structure determination of Ixolaris and factor X(a) interaction reveals a noncanonical mechanism of Kunitz inhibition.</title>
        <authorList>
            <person name="De Paula V.S."/>
            <person name="Sgourakis N.G."/>
            <person name="Francischetti I.M.B."/>
            <person name="Almeida F.C.L."/>
            <person name="Monteiro R.Q."/>
            <person name="Valente A.P."/>
        </authorList>
    </citation>
    <scope>INTERACTION WITH TICK IXOLARIS</scope>
</reference>
<reference key="26">
    <citation type="journal article" date="2021" name="Cells">
        <title>Coagulation Factor Xa Induces Proinflammatory Responses in Cardiac Fibroblasts via Activation of Protease-Activated Receptor-1.</title>
        <authorList>
            <person name="D'Alessandro E."/>
            <person name="Scaf B."/>
            <person name="Munts C."/>
            <person name="van Hunnik A."/>
            <person name="Trevelyan C.J."/>
            <person name="Verheule S."/>
            <person name="Spronk H.M.H."/>
            <person name="Turner N.A."/>
            <person name="Ten Cate H."/>
            <person name="Schotten U."/>
            <person name="van Nieuwenhoven F.A."/>
        </authorList>
    </citation>
    <scope>FUNCTION</scope>
</reference>
<reference key="27">
    <citation type="journal article" date="2021" name="Int. J. Mol. Sci.">
        <title>Ixodes ricinus Salivary Serpin Iripin-8 Inhibits the Intrinsic Pathway of Coagulation and Complement.</title>
        <authorList>
            <person name="Kotal J."/>
            <person name="Polderdijk S.G.I."/>
            <person name="Langhansova H."/>
            <person name="Ederova M."/>
            <person name="Martins L.A."/>
            <person name="Berankova Z."/>
            <person name="Chlastakova A."/>
            <person name="Hajdusek O."/>
            <person name="Kotsyfakis M."/>
            <person name="Huntington J.A."/>
            <person name="Chmelar J."/>
        </authorList>
    </citation>
    <scope>INTERACTION WITH TICK IRIPIN-8</scope>
</reference>
<reference key="28">
    <citation type="journal article" date="2022" name="Immunohorizons">
        <title>Alboserpin, the Main Salivary Anticoagulant from the Disease Vector Aedes albopictus, Displays Anti-FXa-PAR Signaling In Vitro and In Vivo.</title>
        <authorList>
            <person name="Shrivastava G."/>
            <person name="Valenzuela-Leon P.C."/>
            <person name="Chagas A.C."/>
            <person name="Kern O."/>
            <person name="Botello K."/>
            <person name="Zhang Y."/>
            <person name="Martin-Martin I."/>
            <person name="Oliveira M.B."/>
            <person name="Tirloni L."/>
            <person name="Calvo E."/>
        </authorList>
    </citation>
    <scope>FUNCTION</scope>
</reference>
<reference evidence="52" key="29">
    <citation type="journal article" date="2023" name="Front. Immunol.">
        <title>Guianensin, a Simulium guianense salivary protein, has broad anti-hemostatic and anti-inflammatory properties.</title>
        <authorList>
            <person name="Valenzuela-Leon P.C."/>
            <person name="Campos Chagas A."/>
            <person name="Martin-Martin I."/>
            <person name="Williams A.E."/>
            <person name="Berger M."/>
            <person name="Shrivastava G."/>
            <person name="Paige A.S."/>
            <person name="Kotsyfakis M."/>
            <person name="Tirloni L."/>
            <person name="Calvo E."/>
        </authorList>
    </citation>
    <scope>INTERACTION WITH BLACK FLY GUIANENSIN</scope>
</reference>
<reference key="30">
    <citation type="journal article" date="1993" name="J. Mol. Biol.">
        <title>Structure of human des(1-45) factor Xa at 2.2-A resolution.</title>
        <authorList>
            <person name="Padmanabhan K."/>
            <person name="Padmanabhan K.P."/>
            <person name="Tulinsky A."/>
            <person name="Park C.H."/>
            <person name="Bode W."/>
            <person name="Huber R."/>
            <person name="Blankenship D.T."/>
            <person name="Cardin A.D."/>
            <person name="Kisiel W."/>
        </authorList>
    </citation>
    <scope>X-RAY CRYSTALLOGRAPHY (2.2 ANGSTROMS) OF 86-179 AND 235-278</scope>
</reference>
<reference key="31">
    <citation type="journal article" date="1998" name="Proc. Natl. Acad. Sci. U.S.A.">
        <title>Structural basis for chemical inhibition of human blood coagulation factor Xa.</title>
        <authorList>
            <person name="Kamata K."/>
            <person name="Kawamoto H."/>
            <person name="Honma T."/>
            <person name="Iwama T."/>
            <person name="Kim S.H."/>
        </authorList>
    </citation>
    <scope>X-RAY CRYSTALLOGRAPHY (2.3 ANGSTROMS) OF 86-179 AND 235-278</scope>
</reference>
<reference key="32">
    <citation type="journal article" date="2007" name="Bioorg. Med. Chem.">
        <title>Substituted thiophene-anthranilamides as potent inhibitors of human factor Xa.</title>
        <authorList>
            <person name="Kochanny M.J."/>
            <person name="Adler M."/>
            <person name="Ewing J."/>
            <person name="Griedel B.D."/>
            <person name="Ho E."/>
            <person name="Karanjawala R."/>
            <person name="Lee W."/>
            <person name="Lentz D."/>
            <person name="Liang A.M."/>
            <person name="Morrissey M.M."/>
            <person name="Phillips G.B."/>
            <person name="Post J."/>
            <person name="Sacchi K.L."/>
            <person name="Sakata S.T."/>
            <person name="Subramanyam B."/>
            <person name="Vergona R."/>
            <person name="Walters J."/>
            <person name="White K.A."/>
            <person name="Whitlow M."/>
            <person name="Ye B."/>
            <person name="Zhao Z."/>
            <person name="Shaw K.J."/>
        </authorList>
    </citation>
    <scope>X-RAY CRYSTALLOGRAPHY (1.62 ANGSTROMS) OF 127-467</scope>
</reference>
<reference key="33">
    <citation type="journal article" date="1989" name="Blood">
        <title>Molecular characterization of human factor XSan Antonio.</title>
        <authorList>
            <person name="Reddy S.V."/>
            <person name="Zhou Z.Q."/>
            <person name="Rao K.J."/>
            <person name="Scott J.P."/>
            <person name="Watzke H."/>
            <person name="High K.A."/>
            <person name="Jagadeeswaran P."/>
        </authorList>
    </citation>
    <scope>VARIANT FA10D CYS-366</scope>
</reference>
<reference key="34">
    <citation type="journal article" date="1990" name="J. Biol. Chem.">
        <title>Molecular defect (Gla+14TO: hereditary factor X deficiency (factor X 'Vorarlberg').</title>
        <authorList>
            <person name="Watzke H.H."/>
            <person name="Lechner K."/>
            <person name="Roberts H.R."/>
            <person name="Reddy S.V."/>
            <person name="Welsch D.J."/>
            <person name="Friedman P."/>
            <person name="Mahr G."/>
            <person name="Jagadeeswaran P."/>
            <person name="Monroe D.M."/>
            <person name="High K.A."/>
        </authorList>
    </citation>
    <scope>VARIANTS FA10D LYS-54 AND LYS-142</scope>
    <scope>CHARACTERIZATION OF VARIANT FA10D LYS-54</scope>
</reference>
<reference key="35">
    <citation type="journal article" date="1991" name="Blood">
        <title>Molecular defect in coagulation factor XFriuli results from a substitution of serine for proline at position 343.</title>
        <authorList>
            <person name="James H.L."/>
            <person name="Girolami A."/>
            <person name="Fair D.S."/>
        </authorList>
    </citation>
    <scope>VARIANT FA10D SER-383</scope>
</reference>
<reference key="36">
    <citation type="journal article" date="1995" name="Br. J. Haematol.">
        <title>Molecular bases of CRM+ factor X deficiency: a frequent mutation (Ser334Pro) in the catalytic domain and a substitution (Glu102Lys) in the second EGF-like domain.</title>
        <authorList>
            <person name="Marchetti G."/>
            <person name="Castaman G."/>
            <person name="Pinotti M."/>
            <person name="Lunghi B."/>
            <person name="Di Iasio M.G."/>
            <person name="Ruggieri M."/>
            <person name="Rodeghiero F."/>
            <person name="Bernardi F."/>
        </authorList>
    </citation>
    <scope>VARIANTS FA10D LYS-142 AND PRO-374</scope>
</reference>
<reference key="37">
    <citation type="journal article" date="1995" name="Eur. J. Biochem.">
        <title>Functional consequences of the Ser334--&gt;Pro mutation in a human factor X variant (factor XMarseille).</title>
        <authorList>
            <person name="Bezeaud A."/>
            <person name="Miyata T."/>
            <person name="Helley D."/>
            <person name="Zeng Y.Z."/>
            <person name="Kato H."/>
            <person name="Aillaud M.F."/>
            <person name="Juhan-Vague I."/>
            <person name="Guillin M.C."/>
        </authorList>
    </citation>
    <scope>VARIANT FA10D PRO-374</scope>
    <scope>CHARACTERIZATION OF VARIANT FA10D PRO-374</scope>
</reference>
<reference key="38">
    <citation type="journal article" date="1995" name="Hum. Genet.">
        <title>Factor XKetchikan: a variant molecule in which Gly replaces a Gla residue at position 14 in the light chain.</title>
        <authorList>
            <person name="Kim D.J."/>
            <person name="Thompson A.R."/>
            <person name="James H.L."/>
        </authorList>
    </citation>
    <scope>VARIANT FA10D GLY-54</scope>
</reference>
<reference key="39">
    <citation type="journal article" date="1996" name="Blood Coagul. Fibrinolysis">
        <title>Factor X Stockton: a mild bleeding diathesis associated with an active site mutation in factor X.</title>
        <authorList>
            <person name="Messier T.L."/>
            <person name="Wong C.Y."/>
            <person name="Bovill E.G."/>
            <person name="Long G.L."/>
            <person name="Church W.R."/>
        </authorList>
    </citation>
    <scope>VARIANT FA10D ASN-322</scope>
    <scope>CHARACTERIZATION OF VARIANT FA10D ASN-322</scope>
</reference>
<reference key="40">
    <citation type="journal article" date="1996" name="J. Biol. Chem.">
        <title>Factor XSt. Louis II. Identification of a glycine substitution at residue 7 and characterization of the recombinant protein.</title>
        <authorList>
            <person name="Rudolph A.E."/>
            <person name="Mullane M.P."/>
            <person name="Porche-Sorbet R."/>
            <person name="Tsuda S."/>
            <person name="Miletich J.P."/>
        </authorList>
    </citation>
    <scope>VARIANT FA10D GLY-47</scope>
</reference>
<reference key="41">
    <citation type="journal article" date="1999" name="Br. J. Haematol.">
        <title>A family with hereditary factor X deficiency with a point mutation Gla32 to Gln in the Gla domain (factor X Tokyo).</title>
        <authorList>
            <person name="Zama T."/>
            <person name="Murata M."/>
            <person name="Watanabe R."/>
            <person name="Yokoyama K."/>
            <person name="Moriki T."/>
            <person name="Ambo H."/>
            <person name="Murakami H."/>
            <person name="Kikuchi M."/>
            <person name="Ikeda Y."/>
        </authorList>
    </citation>
    <scope>VARIANT FA10D GLN-72</scope>
</reference>
<reference key="42">
    <citation type="journal article" date="1999" name="Nat. Genet.">
        <title>Characterization of single-nucleotide polymorphisms in coding regions of human genes.</title>
        <authorList>
            <person name="Cargill M."/>
            <person name="Altshuler D."/>
            <person name="Ireland J."/>
            <person name="Sklar P."/>
            <person name="Ardlie K."/>
            <person name="Patil N."/>
            <person name="Shaw N."/>
            <person name="Lane C.R."/>
            <person name="Lim E.P."/>
            <person name="Kalyanaraman N."/>
            <person name="Nemesh J."/>
            <person name="Ziaugra L."/>
            <person name="Friedland L."/>
            <person name="Rolfe A."/>
            <person name="Warrington J."/>
            <person name="Lipshutz R."/>
            <person name="Daley G.Q."/>
            <person name="Lander E.S."/>
        </authorList>
    </citation>
    <scope>VARIANTS ILE-7 AND HIS-30</scope>
</reference>
<reference key="43">
    <citation type="journal article" date="1999" name="Nat. Genet.">
        <authorList>
            <person name="Cargill M."/>
            <person name="Altshuler D."/>
            <person name="Ireland J."/>
            <person name="Sklar P."/>
            <person name="Ardlie K."/>
            <person name="Patil N."/>
            <person name="Shaw N."/>
            <person name="Lane C.R."/>
            <person name="Lim E.P."/>
            <person name="Kalyanaraman N."/>
            <person name="Nemesh J."/>
            <person name="Ziaugra L."/>
            <person name="Friedland L."/>
            <person name="Rolfe A."/>
            <person name="Warrington J."/>
            <person name="Lipshutz R."/>
            <person name="Daley G.Q."/>
            <person name="Lander E.S."/>
        </authorList>
    </citation>
    <scope>ERRATUM OF PUBMED:10391209</scope>
</reference>
<reference key="44">
    <citation type="journal article" date="2000" name="Hum. Genet.">
        <title>Molecular analysis of the genotype-phenotype relationship in factor X deficiency.</title>
        <authorList>
            <person name="Millar D.S."/>
            <person name="Elliston L."/>
            <person name="Deex P."/>
            <person name="Krawczak M."/>
            <person name="Wacey A.I."/>
            <person name="Reynaud J."/>
            <person name="Nieuwenhuis H.K."/>
            <person name="Bolton-Maggs P."/>
            <person name="Mannucci P.M."/>
            <person name="Reverter J.C."/>
            <person name="Cachia P."/>
            <person name="Pasi K.J."/>
            <person name="Layton D.M."/>
            <person name="Cooper D.N."/>
        </authorList>
    </citation>
    <scope>VARIANTS FA10D LYS-54; TYR-149; TYR-151; ARG-289; LYS-304; TRP-327; MET-338; LYS-350; MET-358; SER-363 AND ARG-404</scope>
</reference>
<reference key="45">
    <citation type="journal article" date="2000" name="Thromb. Haemost.">
        <title>The impact of Glu102Lys on the factor X function in a patient with a doubly homozygous factor X deficiency (Gla14Lys and Glu102Lys).</title>
        <authorList>
            <person name="Forberg E."/>
            <person name="Huhmann I."/>
            <person name="Jimenez-Boj E."/>
            <person name="Watzke H.H."/>
        </authorList>
    </citation>
    <scope>CHARACTERIZATION OF VARIANT FA10D LYS-142</scope>
</reference>
<reference key="46">
    <citation type="journal article" date="2001" name="Thromb. Res.">
        <title>A dysfunctional factor X (factor X San Giovanni Rotondo) present at homozygous and double heterozygous level: identification of a novel microdeletion (delC556) and missense mutation (Lys(408)--&gt;Asn) in the factor X gene. A study of an Italian family.</title>
        <authorList>
            <person name="Simioni P."/>
            <person name="Vianello F."/>
            <person name="Kalafatis M."/>
            <person name="Barzon L."/>
            <person name="Ladogana S."/>
            <person name="Paolucci P."/>
            <person name="Carotenuto M."/>
            <person name="Dal Bello F."/>
            <person name="Palu G."/>
            <person name="Girolami A."/>
        </authorList>
    </citation>
    <scope>VARIANT FA10D ASN-448</scope>
</reference>
<reference key="47">
    <citation type="journal article" date="2001" name="Thromb. Res.">
        <title>A new factor X defect (factor X Padua 3): a compound heterozygous between true deficiency (Gly(380)--&gt;Arg) and an abnormality (Ser(334)--&gt;Pro).</title>
        <authorList>
            <person name="Vianello F."/>
            <person name="Lombardi A.M."/>
            <person name="Boldrin C."/>
            <person name="Luni S."/>
            <person name="Girolami A."/>
        </authorList>
    </citation>
    <scope>VARIANTS FA10D PRO-374 AND ARG-420</scope>
</reference>
<reference key="48">
    <citation type="journal article" date="2003" name="Blood Coagul. Fibrinolysis">
        <title>A novel type I factor X variant (factor X Cys350Phe) due to loss of a disulfide bond in the catalytic domain.</title>
        <authorList>
            <person name="Vianello F."/>
            <person name="Lombardi A.M."/>
            <person name="Bello F.D."/>
            <person name="Palu G."/>
            <person name="Zanon E."/>
            <person name="Girolami A."/>
        </authorList>
    </citation>
    <scope>VARIANT FA10D PHE-390</scope>
</reference>
<reference key="49">
    <citation type="journal article" date="2003" name="Thromb. Haemost.">
        <title>Impaired prothrombinase activity of factor X Gly381Asp results in severe familial CRM+ FX deficiency.</title>
        <authorList>
            <person name="Pinotti M."/>
            <person name="Camire R.M."/>
            <person name="Baroni M."/>
            <person name="Rajab A."/>
            <person name="Marchetti G."/>
            <person name="Bernardi F."/>
        </authorList>
    </citation>
    <scope>VARIANT FA10D ASP-421</scope>
    <scope>CHARACTERIZATION OF VARIANT FA10D ASP-421</scope>
</reference>
<reference key="50">
    <citation type="journal article" date="2004" name="Haematologica">
        <title>Molecular characterization of factor X deficiency associated with borderline plasma factor X level.</title>
        <authorList>
            <person name="Pinotti M."/>
            <person name="Monti M."/>
            <person name="Baroni M."/>
            <person name="Marchetti G."/>
            <person name="Bernardi F."/>
        </authorList>
    </citation>
    <scope>VARIANT FA10D ALA-382</scope>
    <scope>CHARACTERIZATION OF VARIANT FA10D ALA-382</scope>
</reference>
<reference key="51">
    <citation type="journal article" date="2005" name="Blood Coagul. Fibrinolysis">
        <title>Genetic analysis of hereditary factor X deficiency in a French patient of Sri Lankan ancestry: in vitro expression study identified Gly366Ser substitution as the molecular basis of the dysfunctional factor X.</title>
        <authorList>
            <person name="Isshiki I."/>
            <person name="Favier R."/>
            <person name="Moriki T."/>
            <person name="Uchida T."/>
            <person name="Ishihara H."/>
            <person name="Van Dreden P."/>
            <person name="Murata M."/>
            <person name="Ikeda Y."/>
        </authorList>
    </citation>
    <scope>VARIANT FA10D SER-406</scope>
    <scope>CHARACTERIZATION OF VARIANT FA10D SER-406</scope>
</reference>
<reference key="52">
    <citation type="journal article" date="2007" name="Thromb. Haemost.">
        <title>Analysis of the novel factor X gene mutation Glu51Lys in two families with factor X-Riyadh anomaly.</title>
        <authorList>
            <person name="Al-Hilali A."/>
            <person name="Wulff K."/>
            <person name="Abdel-Razeq H."/>
            <person name="Saud K.A."/>
            <person name="Al-Gaili F."/>
            <person name="Herrmann F.H."/>
        </authorList>
    </citation>
    <scope>VARIANT FA10D LYS-91</scope>
</reference>
<reference key="53">
    <citation type="journal article" date="2009" name="Thromb. Res.">
        <title>Characterization of a homozygous Gly11Val mutation in the Gla domain of coagulation factor X.</title>
        <authorList>
            <person name="Chafa O."/>
            <person name="Tagzirt M."/>
            <person name="Tapon-Bretaudiere J."/>
            <person name="Reghis A."/>
            <person name="Fischer A.M."/>
            <person name="LeBonniec B.F."/>
        </authorList>
    </citation>
    <scope>VARIANT FA10D VAL-51</scope>
</reference>
<reference key="54">
    <citation type="journal article" date="2014" name="Biochemistry">
        <title>Molecular dynamics characterization of five pathogenic Factor X mutants associated with decreased catalytic activity.</title>
        <authorList>
            <person name="Abdel-Azeim S."/>
            <person name="Oliva R."/>
            <person name="Chermak E."/>
            <person name="De Cristofaro R."/>
            <person name="Cavallo L."/>
        </authorList>
    </citation>
    <scope>VARIANTS FA10D ASN-322; MET-358; ALA-382; SER-406 AND ASP-421</scope>
    <scope>CHARACTERIZATION OF VARIANTS FA10D ASN-322; MET-358; ALA-382; SER-406 AND ASP-421</scope>
</reference>
<reference key="55">
    <citation type="journal article" date="2015" name="Eur. J. Clin. Invest.">
        <title>Frequency of the p.Gly262Asp mutation in congenital Factor X deficiency.</title>
        <authorList>
            <person name="Epcacan S."/>
            <person name="Menegatti M."/>
            <person name="Akbayram S."/>
            <person name="Cairo A."/>
            <person name="Peyvandi F."/>
            <person name="Oner A.F."/>
        </authorList>
    </citation>
    <scope>VARIANTS FA10D 176-THR--GLN-186 DEL AND ASP-262</scope>
</reference>
<organism>
    <name type="scientific">Homo sapiens</name>
    <name type="common">Human</name>
    <dbReference type="NCBI Taxonomy" id="9606"/>
    <lineage>
        <taxon>Eukaryota</taxon>
        <taxon>Metazoa</taxon>
        <taxon>Chordata</taxon>
        <taxon>Craniata</taxon>
        <taxon>Vertebrata</taxon>
        <taxon>Euteleostomi</taxon>
        <taxon>Mammalia</taxon>
        <taxon>Eutheria</taxon>
        <taxon>Euarchontoglires</taxon>
        <taxon>Primates</taxon>
        <taxon>Haplorrhini</taxon>
        <taxon>Catarrhini</taxon>
        <taxon>Hominidae</taxon>
        <taxon>Homo</taxon>
    </lineage>
</organism>
<proteinExistence type="evidence at protein level"/>
<comment type="function">
    <text evidence="21 29 30 34 37 38 50">Factor Xa is a vitamin K-dependent glycoprotein that converts prothrombin to thrombin in the presence of factor Va, calcium and phospholipid during blood clotting (PubMed:22409427). Factor Xa activates pro-inflammatory signaling pathways in a protease-activated receptor (PAR)-dependent manner (PubMed:24041930, PubMed:30568593, PubMed:34831181, PubMed:18202198). Up-regulates expression of protease-activated receptors (PARs) F2R, F2RL1 and F2RL2 in dermal microvascular endothelial cells (PubMed:35738824). Triggers the production of pro-inflammatory cytokines, such as MCP-1/CCL2 and IL6, in cardiac fibroblasts and umbilical vein endothelial cells in PAR-1/F2R-dependent manner (PubMed:30568593, PubMed:34831181). Triggers the production of pro-inflammatory cytokines, such as MCP-1/CCL2, IL6, TNF-alpha/TNF, IL-1beta/IL1B, IL8/CXCL8 and IL18, in endothelial cells and atrial tissues (PubMed:24041930, PubMed:35738824, PubMed:9780208). Induces expression of adhesion molecules, such as ICAM1, VCAM1 and SELE, in endothelial cells and atrial tissues (PubMed:24041930, PubMed:35738824, PubMed:9780208). Increases expression of phosphorylated ERK1/2 in dermal microvascular endothelial cells and atrial tissues (PubMed:24041930, PubMed:35738824). Triggers activation of the transcription factor NF-kappa-B in dermal microvascular endothelial cells and atrial tissues (PubMed:24041930, PubMed:35738824). Activates pro-inflammatory and pro-fibrotic responses in dermal fibroblasts and enhances wound healing probably via PAR-2/F2RL1-dependent mechanism (PubMed:18202198). Activates barrier protective signaling responses in endothelial cells in PAR-2/F2RL1-dependent manner; the activity depends on the cleavage of PAR-2/F2RL1 by factor Xa (PubMed:22409427). Up-regulates expression of plasminogen activator inhibitor 1 (SERPINE1) in atrial tissues (PubMed:24041930).</text>
</comment>
<comment type="catalytic activity">
    <reaction>
        <text>Selective cleavage of Arg-|-Thr and then Arg-|-Ile bonds in prothrombin to form thrombin.</text>
        <dbReference type="EC" id="3.4.21.6"/>
    </reaction>
</comment>
<comment type="activity regulation">
    <text evidence="25 40">Inhibited by SERPINA5 and SERPINA10.</text>
</comment>
<comment type="subunit">
    <text evidence="13 18 20 26 28 35 36 39">The two chains are formed from a single-chain precursor by the excision of two Arg residues and are held together by 1 or more disulfide bonds. Forms a heterodimer with SERPINA5. Interacts (inactive and activated) with ixolaris, an anticoagulant protein from Ixodes scapularis saliva (PubMed:11986214, PubMed:31133602, PubMed:18042685, PubMed:16807644). Interacts (activated) with iripin-8, a serine protease inhibitor from Ixodes ricinus saliva (PubMed:34502392). Interacts (activated) with FXa-directed anticoagulant from Aedes albopictus saliva (PubMed:21673107). Interacts (activated) with guianensin, an anticoagulant protein from Simulium guianense saliva (PubMed:37469515). Interacts (activated) with simukunin, an anticoagulant protein from Simulium vittatum saliva (PubMed:22383955).</text>
</comment>
<comment type="interaction">
    <interactant intactId="EBI-719750">
        <id>P00742</id>
    </interactant>
    <interactant intactId="EBI-22310682">
        <id>P0DPK4</id>
        <label>NOTCH2NLC</label>
    </interactant>
    <organismsDiffer>false</organismsDiffer>
    <experiments>3</experiments>
</comment>
<comment type="interaction">
    <interactant intactId="EBI-719750">
        <id>P00742</id>
    </interactant>
    <interactant intactId="EBI-3941758">
        <id>Q9UK55</id>
        <label>SERPINA10</label>
    </interactant>
    <organismsDiffer>false</organismsDiffer>
    <experiments>2</experiments>
</comment>
<comment type="interaction">
    <interactant intactId="EBI-719750">
        <id>P00742</id>
    </interactant>
    <interactant intactId="EBI-947187">
        <id>Q9UHD9</id>
        <label>UBQLN2</label>
    </interactant>
    <organismsDiffer>false</organismsDiffer>
    <experiments>3</experiments>
</comment>
<comment type="subcellular location">
    <subcellularLocation>
        <location>Secreted</location>
    </subcellularLocation>
</comment>
<comment type="tissue specificity">
    <text evidence="41">Plasma; synthesized in the liver.</text>
</comment>
<comment type="PTM">
    <text>The vitamin K-dependent, enzymatic carboxylation of some glutamate residues allows the modified protein to bind calcium.</text>
</comment>
<comment type="PTM">
    <text evidence="27 45">N- and O-glycosylated. O-glycosylated with core 1 or possibly core 8 glycans.</text>
</comment>
<comment type="PTM">
    <text evidence="2 49">Proteolytically cleaved and activated by cathepsin CTSG (PubMed:8920993). The activation peptide is cleaved by factor IXa (in the intrinsic pathway), or by factor VIIa (in the extrinsic pathway) (By similarity).</text>
</comment>
<comment type="PTM">
    <text evidence="42">The iron and 2-oxoglutarate dependent 3-hydroxylation of aspartate and asparagine is (R) stereospecific within EGF domains.</text>
</comment>
<comment type="disease" evidence="8 9 10 11 12 14 15 16 17 19 22 23 24 31 32 33 43 44 46 47 48">
    <disease id="DI-03028">
        <name>Factor X deficiency</name>
        <acronym>FA10D</acronym>
        <description>A hemorrhagic disease with variable presentation. Affected individuals can manifest prolonged nasal and mucosal hemorrhage, menorrhagia, hematuria, and occasionally hemarthrosis. Some patients do not have clinical bleeding diathesis.</description>
        <dbReference type="MIM" id="227600"/>
    </disease>
    <text>The disease is caused by variants affecting the gene represented in this entry.</text>
</comment>
<comment type="similarity">
    <text evidence="5">Belongs to the peptidase S1 family.</text>
</comment>
<comment type="online information" name="Wikipedia">
    <link uri="https://en.wikipedia.org/wiki/Factor_X"/>
    <text>Factor X entry</text>
</comment>
<sequence>MGRPLHLVLLSASLAGLLLLGESLFIRREQANNILARVTRANSFLEEMKKGHLERECMEETCSYEEAREVFEDSDKTNEFWNKYKDGDQCETSPCQNQGKCKDGLGEYTCTCLEGFEGKNCELFTRKLCSLDNGDCDQFCHEEQNSVVCSCARGYTLADNGKACIPTGPYPCGKQTLERRKRSVAQATSSSGEAPDSITWKPYDAADLDPTENPFDLLDFNQTQPERGDNNLTRIVGGQECKDGECPWQALLINEENEGFCGGTILSEFYILTAAHCLYQAKRFKVRVGDRNTEQEEGGEAVHEVEVVIKHNRFTKETYDFDIAVLRLKTPITFRMNVAPACLPERDWAESTLMTQKTGIVSGFGRTHEKGRQSTRLKMLEVPYVDRNSCKLSSSFIITQNMFCAGYDTKQEDACQGDSGGPHVTRFKDTYFVTGIVSWGEGCARKGKYGIYTKVTAFLKWIDRSMKTRGLPKAKSHAPEVITSSPLK</sequence>
<gene>
    <name type="primary">F10</name>
</gene>
<accession>P00742</accession>
<accession>Q14340</accession>
<feature type="signal peptide" evidence="3">
    <location>
        <begin position="1"/>
        <end position="31"/>
    </location>
</feature>
<feature type="propeptide" id="PRO_0000027786" evidence="42">
    <location>
        <begin position="32"/>
        <end position="40"/>
    </location>
</feature>
<feature type="chain" id="PRO_0000027787" description="Coagulation factor X">
    <location>
        <begin position="41"/>
        <end position="488"/>
    </location>
</feature>
<feature type="chain" id="PRO_0000027788" description="Factor X light chain">
    <location>
        <begin position="41"/>
        <end position="179"/>
    </location>
</feature>
<feature type="chain" id="PRO_0000027789" description="Factor X heavy chain">
    <location>
        <begin position="183"/>
        <end position="488"/>
    </location>
</feature>
<feature type="propeptide" id="PRO_0000027790" description="Activation peptide">
    <location>
        <begin position="183"/>
        <end position="234"/>
    </location>
</feature>
<feature type="chain" id="PRO_0000027791" description="Activated factor Xa heavy chain">
    <location>
        <begin position="235"/>
        <end position="488"/>
    </location>
</feature>
<feature type="domain" description="Gla" evidence="6">
    <location>
        <begin position="41"/>
        <end position="85"/>
    </location>
</feature>
<feature type="domain" description="EGF-like 1; calcium-binding" evidence="4">
    <location>
        <begin position="86"/>
        <end position="122"/>
    </location>
</feature>
<feature type="domain" description="EGF-like 2" evidence="4">
    <location>
        <begin position="125"/>
        <end position="165"/>
    </location>
</feature>
<feature type="domain" description="Peptidase S1" evidence="5">
    <location>
        <begin position="235"/>
        <end position="467"/>
    </location>
</feature>
<feature type="region of interest" description="O-glycosylated at one site">
    <location>
        <begin position="183"/>
        <end position="203"/>
    </location>
</feature>
<feature type="region of interest" description="O-glycosylated at one site">
    <location>
        <begin position="476"/>
        <end position="485"/>
    </location>
</feature>
<feature type="active site" description="Charge relay system">
    <location>
        <position position="276"/>
    </location>
</feature>
<feature type="active site" description="Charge relay system">
    <location>
        <position position="322"/>
    </location>
</feature>
<feature type="active site" description="Charge relay system">
    <location>
        <position position="419"/>
    </location>
</feature>
<feature type="modified residue" description="4-carboxyglutamate" evidence="6 42">
    <location>
        <position position="46"/>
    </location>
</feature>
<feature type="modified residue" description="4-carboxyglutamate" evidence="6 42">
    <location>
        <position position="47"/>
    </location>
</feature>
<feature type="modified residue" description="4-carboxyglutamate" evidence="6 42">
    <location>
        <position position="54"/>
    </location>
</feature>
<feature type="modified residue" description="4-carboxyglutamate" evidence="6 42">
    <location>
        <position position="56"/>
    </location>
</feature>
<feature type="modified residue" description="4-carboxyglutamate" evidence="6 42">
    <location>
        <position position="59"/>
    </location>
</feature>
<feature type="modified residue" description="4-carboxyglutamate" evidence="6 42">
    <location>
        <position position="60"/>
    </location>
</feature>
<feature type="modified residue" description="4-carboxyglutamate" evidence="6 42">
    <location>
        <position position="65"/>
    </location>
</feature>
<feature type="modified residue" description="4-carboxyglutamate" evidence="6 42">
    <location>
        <position position="66"/>
    </location>
</feature>
<feature type="modified residue" description="4-carboxyglutamate" evidence="6 42">
    <location>
        <position position="69"/>
    </location>
</feature>
<feature type="modified residue" description="4-carboxyglutamate" evidence="6 42">
    <location>
        <position position="72"/>
    </location>
</feature>
<feature type="modified residue" description="4-carboxyglutamate" evidence="6 42">
    <location>
        <position position="79"/>
    </location>
</feature>
<feature type="modified residue" description="(3R)-3-hydroxyaspartate" evidence="42">
    <location>
        <position position="103"/>
    </location>
</feature>
<feature type="glycosylation site" description="O-linked (GalNAc...) threonine" evidence="45">
    <location>
        <position position="199"/>
    </location>
</feature>
<feature type="glycosylation site" description="O-linked (GalNAc...) threonine" evidence="45">
    <location>
        <position position="211"/>
    </location>
</feature>
<feature type="glycosylation site" id="CAR_000012" description="N-linked (GlcNAc...) asparagine" evidence="45">
    <location>
        <position position="221"/>
    </location>
</feature>
<feature type="glycosylation site" id="CAR_000013" description="N-linked (GlcNAc...) asparagine" evidence="45">
    <location>
        <position position="231"/>
    </location>
</feature>
<feature type="disulfide bond" evidence="1">
    <location>
        <begin position="57"/>
        <end position="62"/>
    </location>
</feature>
<feature type="disulfide bond">
    <location>
        <begin position="90"/>
        <end position="101"/>
    </location>
</feature>
<feature type="disulfide bond">
    <location>
        <begin position="95"/>
        <end position="110"/>
    </location>
</feature>
<feature type="disulfide bond">
    <location>
        <begin position="112"/>
        <end position="121"/>
    </location>
</feature>
<feature type="disulfide bond">
    <location>
        <begin position="129"/>
        <end position="140"/>
    </location>
</feature>
<feature type="disulfide bond">
    <location>
        <begin position="136"/>
        <end position="149"/>
    </location>
</feature>
<feature type="disulfide bond">
    <location>
        <begin position="151"/>
        <end position="164"/>
    </location>
</feature>
<feature type="disulfide bond" description="Interchain (between light and heavy chains)">
    <location>
        <begin position="172"/>
        <end position="342"/>
    </location>
</feature>
<feature type="disulfide bond">
    <location>
        <begin position="241"/>
        <end position="246"/>
    </location>
</feature>
<feature type="disulfide bond">
    <location>
        <begin position="261"/>
        <end position="277"/>
    </location>
</feature>
<feature type="disulfide bond">
    <location>
        <begin position="390"/>
        <end position="404"/>
    </location>
</feature>
<feature type="disulfide bond">
    <location>
        <begin position="415"/>
        <end position="443"/>
    </location>
</feature>
<feature type="sequence variant" id="VAR_014162" description="In dbSNP:rs5963." evidence="7">
    <original>L</original>
    <variation>I</variation>
    <location>
        <position position="7"/>
    </location>
</feature>
<feature type="sequence variant" id="VAR_014163" description="In dbSNP:rs5961." evidence="7">
    <original>Q</original>
    <variation>H</variation>
    <location>
        <position position="30"/>
    </location>
</feature>
<feature type="sequence variant" id="VAR_065428" description="In FA10D; St. Louis II; strongly reduced activity; not activated by factor VIIa and tissue factor; dbSNP:rs121964943." evidence="48">
    <original>E</original>
    <variation>G</variation>
    <location>
        <position position="47"/>
    </location>
</feature>
<feature type="sequence variant" id="VAR_065429" description="In FA10D; dbSNP:rs751782758." evidence="22">
    <original>G</original>
    <variation>V</variation>
    <location>
        <position position="51"/>
    </location>
</feature>
<feature type="sequence variant" id="VAR_065430" description="In FA10D; Ketchikan; dbSNP:rs121964944." evidence="44">
    <original>E</original>
    <variation>G</variation>
    <location>
        <position position="54"/>
    </location>
</feature>
<feature type="sequence variant" id="VAR_065431" description="In FA10D; Vorarlberg; converts prothrombin at a normal rate but shows decreased affinity for calcium; dbSNP:rs121964939." evidence="10 23">
    <original>E</original>
    <variation>K</variation>
    <location>
        <position position="54"/>
    </location>
</feature>
<feature type="sequence variant" id="VAR_065432" description="In FA10D; Tokyo; dbSNP:rs121964945." evidence="8">
    <original>E</original>
    <variation>Q</variation>
    <location>
        <position position="72"/>
    </location>
</feature>
<feature type="sequence variant" id="VAR_065433" description="In FA10D; Riyadh; dbSNP:rs1477329751." evidence="19">
    <original>E</original>
    <variation>K</variation>
    <location>
        <position position="91"/>
    </location>
</feature>
<feature type="sequence variant" id="VAR_065434" description="In FA10D; uncertain significance; detected in patients carrying K-54 or P-374; slightly reduced activity; dbSNP:rs61753266." evidence="9 23 43">
    <original>E</original>
    <variation>K</variation>
    <location>
        <position position="142"/>
    </location>
</feature>
<feature type="sequence variant" id="VAR_065435" description="In FA10D; dbSNP:rs2036522337." evidence="10">
    <original>C</original>
    <variation>Y</variation>
    <location>
        <position position="149"/>
    </location>
</feature>
<feature type="sequence variant" id="VAR_065436" description="In FA10D." evidence="10">
    <original>C</original>
    <variation>Y</variation>
    <location>
        <position position="151"/>
    </location>
</feature>
<feature type="sequence variant" id="VAR_020176" description="In dbSNP:rs3211772." evidence="51">
    <original>A</original>
    <variation>T</variation>
    <location>
        <position position="152"/>
    </location>
</feature>
<feature type="sequence variant" id="VAR_075212" description="In FA10D; uncertain significance." evidence="32">
    <location>
        <begin position="176"/>
        <end position="186"/>
    </location>
</feature>
<feature type="sequence variant" id="VAR_020177" description="In dbSNP:rs3211783." evidence="51">
    <original>G</original>
    <variation>R</variation>
    <location>
        <position position="192"/>
    </location>
</feature>
<feature type="sequence variant" id="VAR_075213" description="In FA10D; uncertain significance; dbSNP:rs1393705267." evidence="32">
    <original>G</original>
    <variation>D</variation>
    <location>
        <position position="262"/>
    </location>
</feature>
<feature type="sequence variant" id="VAR_065437" description="In FA10D; may affect splicing; dbSNP:rs121964946." evidence="10">
    <original>G</original>
    <variation>R</variation>
    <location>
        <position position="289"/>
    </location>
</feature>
<feature type="sequence variant" id="VAR_065438" description="In FA10D; dbSNP:rs747292771." evidence="10">
    <original>E</original>
    <variation>K</variation>
    <location>
        <position position="304"/>
    </location>
</feature>
<feature type="sequence variant" id="VAR_065439" description="In FA10D; Stockton; 50% decrease in specific activity; dbSNP:rs121964942." evidence="31 47">
    <original>D</original>
    <variation>N</variation>
    <location>
        <position position="322"/>
    </location>
</feature>
<feature type="sequence variant" id="VAR_065440" description="In FA10D; dbSNP:rs770119164." evidence="10">
    <original>R</original>
    <variation>W</variation>
    <location>
        <position position="327"/>
    </location>
</feature>
<feature type="sequence variant" id="VAR_065441" description="In FA10D; dbSNP:rs121964947." evidence="10">
    <original>V</original>
    <variation>M</variation>
    <location>
        <position position="338"/>
    </location>
</feature>
<feature type="sequence variant" id="VAR_065442" description="In FA10D; dbSNP:rs372309538." evidence="10">
    <original>E</original>
    <variation>K</variation>
    <location>
        <position position="350"/>
    </location>
</feature>
<feature type="sequence variant" id="VAR_065443" description="In FA10D; Roma; dbSNP:rs768222784." evidence="10 31">
    <original>T</original>
    <variation>M</variation>
    <location>
        <position position="358"/>
    </location>
</feature>
<feature type="sequence variant" id="VAR_065444" description="In FA10D; dbSNP:rs1595099527." evidence="10">
    <original>G</original>
    <variation>S</variation>
    <location>
        <position position="363"/>
    </location>
</feature>
<feature type="sequence variant" id="VAR_065445" description="In FA10D; San Antonio; dbSNP:rs104894392." evidence="33">
    <original>R</original>
    <variation>C</variation>
    <location>
        <position position="366"/>
    </location>
</feature>
<feature type="sequence variant" id="VAR_065446" description="In FA10D; Marseille; decreased cleavage by factor IXa; normal catalytic efficiency for prothrombin; dbSNP:rs121964941." evidence="12 43 46">
    <original>S</original>
    <variation>P</variation>
    <location>
        <position position="374"/>
    </location>
</feature>
<feature type="sequence variant" id="VAR_072751" description="In FA10D; partial loss of activity; dbSNP:rs1595099586." evidence="16 31">
    <original>V</original>
    <variation>A</variation>
    <location>
        <position position="382"/>
    </location>
</feature>
<feature type="sequence variant" id="VAR_065447" description="In FA10D; Friuli; dbSNP:rs121964940." evidence="24">
    <original>P</original>
    <variation>S</variation>
    <location>
        <position position="383"/>
    </location>
</feature>
<feature type="sequence variant" id="VAR_065448" description="In FA10D; Padua 4; dbSNP:rs199778916." evidence="15">
    <original>C</original>
    <variation>F</variation>
    <location>
        <position position="390"/>
    </location>
</feature>
<feature type="sequence variant" id="VAR_065449" description="In FA10D; dbSNP:rs1595099645." evidence="10">
    <original>C</original>
    <variation>R</variation>
    <location>
        <position position="404"/>
    </location>
</feature>
<feature type="sequence variant" id="VAR_065450" description="In FA10D; almost complete loss of activity; dbSNP:rs376163818." evidence="17 31">
    <original>G</original>
    <variation>S</variation>
    <location>
        <position position="406"/>
    </location>
</feature>
<feature type="sequence variant" id="VAR_065451" description="In FA10D; Padua 3; dbSNP:rs750759634." evidence="12">
    <original>G</original>
    <variation>R</variation>
    <location>
        <position position="420"/>
    </location>
</feature>
<feature type="sequence variant" id="VAR_072752" description="In FA10D; significant loss of activity; dbSNP:rs758726161." evidence="14 31">
    <original>G</original>
    <variation>D</variation>
    <location>
        <position position="421"/>
    </location>
</feature>
<feature type="sequence variant" id="VAR_065452" description="In FA10D; San Giovanni Rotondo." evidence="11">
    <original>K</original>
    <variation>N</variation>
    <location>
        <position position="448"/>
    </location>
</feature>
<feature type="mutagenesis site" description="Reduces activity for cleavage of PAR-2/F2RL1. No significant effects on factor Va (F5) binding and activity toward prothrombin in the prothrombinase complex (F10-F5)." evidence="29">
    <original>E</original>
    <variation>Q</variation>
    <location>
        <position position="255"/>
    </location>
</feature>
<feature type="mutagenesis site" description="Reduces activity for cleavage of PAR-2/F2RL1. No significant effects on factor Va (F5) binding and activity toward prothrombin in the prothrombinase complex (F10-F5)." evidence="29">
    <original>E</original>
    <variation>Q</variation>
    <location>
        <position position="256"/>
    </location>
</feature>
<feature type="mutagenesis site" description="Reduces activity for cleavage of PAR-2/F2RL1. No significant effects on factor Va (F5) binding and activity toward prothrombin in the prothrombinase complex (F10-F5)." evidence="29">
    <original>E</original>
    <variation>Q</variation>
    <location>
        <position position="258"/>
    </location>
</feature>
<feature type="mutagenesis site" description="Reduces activity for cleavage of PAR-2/F2RL1. No significant effects on factor Va (F5) binding and activity toward prothrombin in the prothrombinase complex (F10-F5)." evidence="29">
    <original>K</original>
    <variation>E</variation>
    <location>
        <position position="282"/>
    </location>
</feature>
<feature type="mutagenesis site" description="Reduces activity for cleavage of PAR-2/F2RL1. No significant effects on factor Va (F5) binding and activity toward prothrombin in the prothrombinase complex (F10-F5)." evidence="29">
    <original>R</original>
    <variation>E</variation>
    <location>
        <position position="283"/>
    </location>
</feature>
<feature type="mutagenesis site" description="No significant effects on activity for cleavage of PAR-2/F2RL1." evidence="29">
    <original>E</original>
    <variation>A</variation>
    <location>
        <position position="306"/>
    </location>
</feature>
<feature type="mutagenesis site" description="No significant effects on activity for cleavage of PAR-2/F2RL1." evidence="29">
    <original>K</original>
    <variation>A</variation>
    <location>
        <position position="310"/>
    </location>
</feature>
<feature type="mutagenesis site" description="No significant effects on activity for cleavage of PAR-2/F2RL1." evidence="29">
    <original>E</original>
    <variation>A</variation>
    <location>
        <position position="345"/>
    </location>
</feature>
<feature type="mutagenesis site" description="No significant effects on activity for cleavage of PAR-2/F2RL1." evidence="29">
    <original>E</original>
    <variation>A</variation>
    <location>
        <position position="350"/>
    </location>
</feature>
<feature type="mutagenesis site" description="Reduces activity for cleavage of PAR-2/F2RL1." evidence="29">
    <original>R</original>
    <variation>A</variation>
    <location>
        <position position="366"/>
    </location>
</feature>
<feature type="mutagenesis site" description="Reduces activity for cleavage of PAR-2/F2RL1." evidence="29">
    <original>R</original>
    <variation>A</variation>
    <location>
        <position position="372"/>
    </location>
</feature>
<feature type="mutagenesis site" description="Reduces activity for cleavage of PAR-2/F2RL1." evidence="29">
    <original>R</original>
    <variation>A</variation>
    <location>
        <position position="376"/>
    </location>
</feature>
<feature type="mutagenesis site" description="Reduces activity for cleavage of PAR-2/F2RL1." evidence="29">
    <original>R</original>
    <variation>A</variation>
    <location>
        <position position="387"/>
    </location>
</feature>
<feature type="mutagenesis site" description="Reduces activity for cleavage of PAR-2/F2RL1." evidence="29">
    <original>K</original>
    <variation>A</variation>
    <location>
        <position position="391"/>
    </location>
</feature>
<feature type="sequence conflict" description="In Ref. 6; AAA51984 and 8; AAA52486." evidence="52" ref="6 8">
    <original>KVRV</original>
    <variation>E</variation>
    <location>
        <begin position="285"/>
        <end position="288"/>
    </location>
</feature>
<feature type="sequence conflict" description="In Ref. 5; AAA52490." evidence="52" ref="5">
    <original>G</original>
    <variation>S</variation>
    <location>
        <position position="442"/>
    </location>
</feature>
<feature type="helix" evidence="55">
    <location>
        <begin position="47"/>
        <end position="57"/>
    </location>
</feature>
<feature type="helix" evidence="55">
    <location>
        <begin position="64"/>
        <end position="71"/>
    </location>
</feature>
<feature type="helix" evidence="55">
    <location>
        <begin position="74"/>
        <end position="81"/>
    </location>
</feature>
<feature type="turn" evidence="57">
    <location>
        <begin position="89"/>
        <end position="92"/>
    </location>
</feature>
<feature type="strand" evidence="56">
    <location>
        <begin position="96"/>
        <end position="98"/>
    </location>
</feature>
<feature type="strand" evidence="63">
    <location>
        <begin position="102"/>
        <end position="104"/>
    </location>
</feature>
<feature type="strand" evidence="57">
    <location>
        <begin position="105"/>
        <end position="107"/>
    </location>
</feature>
<feature type="strand" evidence="61">
    <location>
        <begin position="109"/>
        <end position="111"/>
    </location>
</feature>
<feature type="strand" evidence="61">
    <location>
        <begin position="116"/>
        <end position="118"/>
    </location>
</feature>
<feature type="strand" evidence="61">
    <location>
        <begin position="123"/>
        <end position="125"/>
    </location>
</feature>
<feature type="turn" evidence="58">
    <location>
        <begin position="129"/>
        <end position="131"/>
    </location>
</feature>
<feature type="helix" evidence="58">
    <location>
        <begin position="132"/>
        <end position="135"/>
    </location>
</feature>
<feature type="strand" evidence="58">
    <location>
        <begin position="137"/>
        <end position="143"/>
    </location>
</feature>
<feature type="strand" evidence="58">
    <location>
        <begin position="146"/>
        <end position="150"/>
    </location>
</feature>
<feature type="strand" evidence="58">
    <location>
        <begin position="155"/>
        <end position="157"/>
    </location>
</feature>
<feature type="strand" evidence="58">
    <location>
        <begin position="164"/>
        <end position="170"/>
    </location>
</feature>
<feature type="strand" evidence="53">
    <location>
        <begin position="172"/>
        <end position="174"/>
    </location>
</feature>
<feature type="strand" evidence="58">
    <location>
        <begin position="236"/>
        <end position="240"/>
    </location>
</feature>
<feature type="turn" evidence="60">
    <location>
        <begin position="243"/>
        <end position="245"/>
    </location>
</feature>
<feature type="strand" evidence="58">
    <location>
        <begin position="249"/>
        <end position="253"/>
    </location>
</feature>
<feature type="turn" evidence="53">
    <location>
        <begin position="255"/>
        <end position="257"/>
    </location>
</feature>
<feature type="strand" evidence="58">
    <location>
        <begin position="259"/>
        <end position="265"/>
    </location>
</feature>
<feature type="strand" evidence="58">
    <location>
        <begin position="267"/>
        <end position="273"/>
    </location>
</feature>
<feature type="helix" evidence="58">
    <location>
        <begin position="275"/>
        <end position="279"/>
    </location>
</feature>
<feature type="strand" evidence="62">
    <location>
        <begin position="281"/>
        <end position="283"/>
    </location>
</feature>
<feature type="strand" evidence="58">
    <location>
        <begin position="285"/>
        <end position="289"/>
    </location>
</feature>
<feature type="strand" evidence="59">
    <location>
        <begin position="291"/>
        <end position="295"/>
    </location>
</feature>
<feature type="strand" evidence="58">
    <location>
        <begin position="301"/>
        <end position="303"/>
    </location>
</feature>
<feature type="strand" evidence="58">
    <location>
        <begin position="305"/>
        <end position="310"/>
    </location>
</feature>
<feature type="turn" evidence="58">
    <location>
        <begin position="316"/>
        <end position="319"/>
    </location>
</feature>
<feature type="strand" evidence="58">
    <location>
        <begin position="324"/>
        <end position="330"/>
    </location>
</feature>
<feature type="helix" evidence="58">
    <location>
        <begin position="346"/>
        <end position="352"/>
    </location>
</feature>
<feature type="turn" evidence="58">
    <location>
        <begin position="353"/>
        <end position="355"/>
    </location>
</feature>
<feature type="strand" evidence="58">
    <location>
        <begin position="356"/>
        <end position="364"/>
    </location>
</feature>
<feature type="strand" evidence="58">
    <location>
        <begin position="366"/>
        <end position="368"/>
    </location>
</feature>
<feature type="strand" evidence="53">
    <location>
        <begin position="372"/>
        <end position="376"/>
    </location>
</feature>
<feature type="strand" evidence="58">
    <location>
        <begin position="378"/>
        <end position="385"/>
    </location>
</feature>
<feature type="helix" evidence="58">
    <location>
        <begin position="387"/>
        <end position="393"/>
    </location>
</feature>
<feature type="strand" evidence="58">
    <location>
        <begin position="402"/>
        <end position="406"/>
    </location>
</feature>
<feature type="strand" evidence="58">
    <location>
        <begin position="408"/>
        <end position="411"/>
    </location>
</feature>
<feature type="turn" evidence="58">
    <location>
        <begin position="416"/>
        <end position="420"/>
    </location>
</feature>
<feature type="strand" evidence="58">
    <location>
        <begin position="422"/>
        <end position="427"/>
    </location>
</feature>
<feature type="strand" evidence="58">
    <location>
        <begin position="430"/>
        <end position="439"/>
    </location>
</feature>
<feature type="strand" evidence="58">
    <location>
        <begin position="441"/>
        <end position="444"/>
    </location>
</feature>
<feature type="strand" evidence="58">
    <location>
        <begin position="450"/>
        <end position="454"/>
    </location>
</feature>
<feature type="helix" evidence="58">
    <location>
        <begin position="455"/>
        <end position="458"/>
    </location>
</feature>
<feature type="helix" evidence="58">
    <location>
        <begin position="459"/>
        <end position="465"/>
    </location>
</feature>
<feature type="strand" evidence="54">
    <location>
        <begin position="471"/>
        <end position="473"/>
    </location>
</feature>
<name>FA10_HUMAN</name>
<dbReference type="EC" id="3.4.21.6"/>
<dbReference type="EMBL" id="K03194">
    <property type="protein sequence ID" value="AAA52490.1"/>
    <property type="molecule type" value="mRNA"/>
</dbReference>
<dbReference type="EMBL" id="M57285">
    <property type="protein sequence ID" value="AAA52421.1"/>
    <property type="molecule type" value="mRNA"/>
</dbReference>
<dbReference type="EMBL" id="AF503510">
    <property type="protein sequence ID" value="AAM19347.1"/>
    <property type="molecule type" value="Genomic_DNA"/>
</dbReference>
<dbReference type="EMBL" id="BC046125">
    <property type="protein sequence ID" value="AAH46125.1"/>
    <property type="molecule type" value="mRNA"/>
</dbReference>
<dbReference type="EMBL" id="N00045">
    <property type="protein sequence ID" value="AAA52764.1"/>
    <property type="molecule type" value="Genomic_DNA"/>
</dbReference>
<dbReference type="EMBL" id="L00390">
    <property type="protein sequence ID" value="AAA52764.1"/>
    <property type="status" value="JOINED"/>
    <property type="molecule type" value="Genomic_DNA"/>
</dbReference>
<dbReference type="EMBL" id="L00391">
    <property type="protein sequence ID" value="AAA52764.1"/>
    <property type="status" value="JOINED"/>
    <property type="molecule type" value="Genomic_DNA"/>
</dbReference>
<dbReference type="EMBL" id="L00392">
    <property type="protein sequence ID" value="AAA52764.1"/>
    <property type="status" value="JOINED"/>
    <property type="molecule type" value="Genomic_DNA"/>
</dbReference>
<dbReference type="EMBL" id="L00393">
    <property type="protein sequence ID" value="AAA52764.1"/>
    <property type="status" value="JOINED"/>
    <property type="molecule type" value="Genomic_DNA"/>
</dbReference>
<dbReference type="EMBL" id="L00394">
    <property type="protein sequence ID" value="AAA52764.1"/>
    <property type="status" value="JOINED"/>
    <property type="molecule type" value="Genomic_DNA"/>
</dbReference>
<dbReference type="EMBL" id="L00395">
    <property type="protein sequence ID" value="AAA52764.1"/>
    <property type="status" value="JOINED"/>
    <property type="molecule type" value="Genomic_DNA"/>
</dbReference>
<dbReference type="EMBL" id="L00396">
    <property type="protein sequence ID" value="AAA52764.1"/>
    <property type="status" value="JOINED"/>
    <property type="molecule type" value="Genomic_DNA"/>
</dbReference>
<dbReference type="EMBL" id="M22613">
    <property type="protein sequence ID" value="AAA51984.1"/>
    <property type="molecule type" value="mRNA"/>
</dbReference>
<dbReference type="EMBL" id="K01886">
    <property type="protein sequence ID" value="AAA52486.1"/>
    <property type="molecule type" value="mRNA"/>
</dbReference>
<dbReference type="EMBL" id="M33297">
    <property type="protein sequence ID" value="AAA52636.1"/>
    <property type="molecule type" value="Genomic_DNA"/>
</dbReference>
<dbReference type="CCDS" id="CCDS9530.1"/>
<dbReference type="PIR" id="A24478">
    <property type="entry name" value="EXHU"/>
</dbReference>
<dbReference type="RefSeq" id="NP_000495.1">
    <property type="nucleotide sequence ID" value="NM_000504.4"/>
</dbReference>
<dbReference type="RefSeq" id="NP_001299603.1">
    <property type="nucleotide sequence ID" value="NM_001312674.1"/>
</dbReference>
<dbReference type="RefSeq" id="NP_001299604.1">
    <property type="nucleotide sequence ID" value="NM_001312675.1"/>
</dbReference>
<dbReference type="PDB" id="1C5M">
    <property type="method" value="X-ray"/>
    <property type="resolution" value="1.95 A"/>
    <property type="chains" value="D=235-488, F=84-179"/>
</dbReference>
<dbReference type="PDB" id="1EZQ">
    <property type="method" value="X-ray"/>
    <property type="resolution" value="2.20 A"/>
    <property type="chains" value="A=235-488, B=46-179"/>
</dbReference>
<dbReference type="PDB" id="1F0R">
    <property type="method" value="X-ray"/>
    <property type="resolution" value="2.10 A"/>
    <property type="chains" value="A=235-488, B=46-179"/>
</dbReference>
<dbReference type="PDB" id="1F0S">
    <property type="method" value="X-ray"/>
    <property type="resolution" value="2.10 A"/>
    <property type="chains" value="A=235-488, B=46-179"/>
</dbReference>
<dbReference type="PDB" id="1FAX">
    <property type="method" value="X-ray"/>
    <property type="resolution" value="3.00 A"/>
    <property type="chains" value="A=235-488, L=84-179"/>
</dbReference>
<dbReference type="PDB" id="1FJS">
    <property type="method" value="X-ray"/>
    <property type="resolution" value="1.92 A"/>
    <property type="chains" value="A=235-468, L=127-178"/>
</dbReference>
<dbReference type="PDB" id="1FXY">
    <property type="method" value="X-ray"/>
    <property type="resolution" value="2.15 A"/>
    <property type="chains" value="A=235-344"/>
</dbReference>
<dbReference type="PDB" id="1G2L">
    <property type="method" value="X-ray"/>
    <property type="resolution" value="1.90 A"/>
    <property type="chains" value="A=235-469, B=86-179"/>
</dbReference>
<dbReference type="PDB" id="1G2M">
    <property type="method" value="X-ray"/>
    <property type="resolution" value="3.02 A"/>
    <property type="chains" value="A=235-469, B=86-179"/>
</dbReference>
<dbReference type="PDB" id="1HCG">
    <property type="method" value="X-ray"/>
    <property type="resolution" value="2.20 A"/>
    <property type="chains" value="A=235-475, B=129-179"/>
</dbReference>
<dbReference type="PDB" id="1IOE">
    <property type="method" value="X-ray"/>
    <property type="resolution" value="2.90 A"/>
    <property type="chains" value="A=235-469, L=84-179"/>
</dbReference>
<dbReference type="PDB" id="1IQE">
    <property type="method" value="X-ray"/>
    <property type="resolution" value="2.90 A"/>
    <property type="chains" value="A=235-469, L=84-179"/>
</dbReference>
<dbReference type="PDB" id="1IQF">
    <property type="method" value="X-ray"/>
    <property type="resolution" value="3.20 A"/>
    <property type="chains" value="A=235-469, L=84-179"/>
</dbReference>
<dbReference type="PDB" id="1IQG">
    <property type="method" value="X-ray"/>
    <property type="resolution" value="2.60 A"/>
    <property type="chains" value="A=235-469, L=84-179"/>
</dbReference>
<dbReference type="PDB" id="1IQH">
    <property type="method" value="X-ray"/>
    <property type="resolution" value="3.00 A"/>
    <property type="chains" value="A=235-469, L=84-179"/>
</dbReference>
<dbReference type="PDB" id="1IQI">
    <property type="method" value="X-ray"/>
    <property type="resolution" value="2.90 A"/>
    <property type="chains" value="A=235-469, L=84-179"/>
</dbReference>
<dbReference type="PDB" id="1IQJ">
    <property type="method" value="X-ray"/>
    <property type="resolution" value="3.00 A"/>
    <property type="chains" value="A=235-469, L=84-179"/>
</dbReference>
<dbReference type="PDB" id="1IQK">
    <property type="method" value="X-ray"/>
    <property type="resolution" value="3.20 A"/>
    <property type="chains" value="A=235-469, L=84-179"/>
</dbReference>
<dbReference type="PDB" id="1IQL">
    <property type="method" value="X-ray"/>
    <property type="resolution" value="2.70 A"/>
    <property type="chains" value="A=235-469, L=84-179"/>
</dbReference>
<dbReference type="PDB" id="1IQM">
    <property type="method" value="X-ray"/>
    <property type="resolution" value="2.60 A"/>
    <property type="chains" value="A=235-469, L=84-179"/>
</dbReference>
<dbReference type="PDB" id="1IQN">
    <property type="method" value="X-ray"/>
    <property type="resolution" value="2.60 A"/>
    <property type="chains" value="A=235-469, L=84-179"/>
</dbReference>
<dbReference type="PDB" id="1KSN">
    <property type="method" value="X-ray"/>
    <property type="resolution" value="2.10 A"/>
    <property type="chains" value="A=235-488, B=46-179"/>
</dbReference>
<dbReference type="PDB" id="1LPG">
    <property type="method" value="X-ray"/>
    <property type="resolution" value="2.00 A"/>
    <property type="chains" value="A=46-179, B=235-488"/>
</dbReference>
<dbReference type="PDB" id="1LPK">
    <property type="method" value="X-ray"/>
    <property type="resolution" value="2.20 A"/>
    <property type="chains" value="A=46-179, B=235-488"/>
</dbReference>
<dbReference type="PDB" id="1LPZ">
    <property type="method" value="X-ray"/>
    <property type="resolution" value="2.40 A"/>
    <property type="chains" value="A=46-179, B=235-488"/>
</dbReference>
<dbReference type="PDB" id="1LQD">
    <property type="method" value="X-ray"/>
    <property type="resolution" value="2.70 A"/>
    <property type="chains" value="A=46-179, B=235-488"/>
</dbReference>
<dbReference type="PDB" id="1MQ5">
    <property type="method" value="X-ray"/>
    <property type="resolution" value="2.10 A"/>
    <property type="chains" value="A=235-467, L=127-177"/>
</dbReference>
<dbReference type="PDB" id="1MQ6">
    <property type="method" value="X-ray"/>
    <property type="resolution" value="2.10 A"/>
    <property type="chains" value="A=235-467, L=127-177"/>
</dbReference>
<dbReference type="PDB" id="1NFU">
    <property type="method" value="X-ray"/>
    <property type="resolution" value="2.05 A"/>
    <property type="chains" value="A=235-488, B=46-240"/>
</dbReference>
<dbReference type="PDB" id="1NFW">
    <property type="method" value="X-ray"/>
    <property type="resolution" value="2.10 A"/>
    <property type="chains" value="A=235-488, B=46-179"/>
</dbReference>
<dbReference type="PDB" id="1NFX">
    <property type="method" value="X-ray"/>
    <property type="resolution" value="2.15 A"/>
    <property type="chains" value="A=235-488, B=46-179"/>
</dbReference>
<dbReference type="PDB" id="1NFY">
    <property type="method" value="X-ray"/>
    <property type="resolution" value="2.10 A"/>
    <property type="chains" value="A=235-488, B=46-179"/>
</dbReference>
<dbReference type="PDB" id="1P0S">
    <property type="method" value="X-ray"/>
    <property type="resolution" value="2.80 A"/>
    <property type="chains" value="H=235-488, L=41-178"/>
</dbReference>
<dbReference type="PDB" id="1V3X">
    <property type="method" value="X-ray"/>
    <property type="resolution" value="2.20 A"/>
    <property type="chains" value="A=235-467, B=127-178"/>
</dbReference>
<dbReference type="PDB" id="1WU1">
    <property type="method" value="X-ray"/>
    <property type="resolution" value="2.30 A"/>
    <property type="chains" value="A=235-467, B=85-179"/>
</dbReference>
<dbReference type="PDB" id="1XKA">
    <property type="method" value="X-ray"/>
    <property type="resolution" value="2.30 A"/>
    <property type="chains" value="C=235-469, L=85-179"/>
</dbReference>
<dbReference type="PDB" id="1XKB">
    <property type="method" value="X-ray"/>
    <property type="resolution" value="2.40 A"/>
    <property type="chains" value="A/B=85-179, C/D=235-469"/>
</dbReference>
<dbReference type="PDB" id="1Z6E">
    <property type="method" value="X-ray"/>
    <property type="resolution" value="1.80 A"/>
    <property type="chains" value="A=235-468, L=127-178"/>
</dbReference>
<dbReference type="PDB" id="2BMG">
    <property type="method" value="X-ray"/>
    <property type="resolution" value="2.70 A"/>
    <property type="chains" value="A=126-178, B=235-468"/>
</dbReference>
<dbReference type="PDB" id="2BOH">
    <property type="method" value="X-ray"/>
    <property type="resolution" value="2.20 A"/>
    <property type="chains" value="A=46-179, B=235-488"/>
</dbReference>
<dbReference type="PDB" id="2BOK">
    <property type="method" value="X-ray"/>
    <property type="resolution" value="1.64 A"/>
    <property type="chains" value="A=235-475, L=126-180"/>
</dbReference>
<dbReference type="PDB" id="2BQ6">
    <property type="method" value="X-ray"/>
    <property type="resolution" value="3.00 A"/>
    <property type="chains" value="A=126-177, B=220-468"/>
</dbReference>
<dbReference type="PDB" id="2BQ7">
    <property type="method" value="X-ray"/>
    <property type="resolution" value="2.20 A"/>
    <property type="chains" value="A=126-177, B=220-468"/>
</dbReference>
<dbReference type="PDB" id="2BQW">
    <property type="method" value="X-ray"/>
    <property type="resolution" value="2.95 A"/>
    <property type="chains" value="A=126-177, B=220-468"/>
</dbReference>
<dbReference type="PDB" id="2CJI">
    <property type="method" value="X-ray"/>
    <property type="resolution" value="2.10 A"/>
    <property type="chains" value="A=235-488, B=46-179"/>
</dbReference>
<dbReference type="PDB" id="2D1J">
    <property type="method" value="X-ray"/>
    <property type="resolution" value="2.20 A"/>
    <property type="chains" value="A=235-467, B=125-178"/>
</dbReference>
<dbReference type="PDB" id="2EI6">
    <property type="method" value="X-ray"/>
    <property type="resolution" value="2.30 A"/>
    <property type="chains" value="A=235-467, B=125-178"/>
</dbReference>
<dbReference type="PDB" id="2EI7">
    <property type="method" value="X-ray"/>
    <property type="resolution" value="2.30 A"/>
    <property type="chains" value="A=235-467, B=125-178"/>
</dbReference>
<dbReference type="PDB" id="2EI8">
    <property type="method" value="X-ray"/>
    <property type="resolution" value="2.10 A"/>
    <property type="chains" value="A=235-467, B=125-178"/>
</dbReference>
<dbReference type="PDB" id="2FZZ">
    <property type="method" value="X-ray"/>
    <property type="resolution" value="2.20 A"/>
    <property type="chains" value="A=235-468, L=127-178"/>
</dbReference>
<dbReference type="PDB" id="2G00">
    <property type="method" value="X-ray"/>
    <property type="resolution" value="2.10 A"/>
    <property type="chains" value="A=235-468, L=127-178"/>
</dbReference>
<dbReference type="PDB" id="2GD4">
    <property type="method" value="X-ray"/>
    <property type="resolution" value="3.30 A"/>
    <property type="chains" value="A/L=126-182, B/H=235-475"/>
</dbReference>
<dbReference type="PDB" id="2H9E">
    <property type="method" value="X-ray"/>
    <property type="resolution" value="2.20 A"/>
    <property type="chains" value="H=235-467, L=86-234"/>
</dbReference>
<dbReference type="PDB" id="2J2U">
    <property type="method" value="X-ray"/>
    <property type="resolution" value="1.90 A"/>
    <property type="chains" value="A=235-488, B=46-179"/>
</dbReference>
<dbReference type="PDB" id="2J34">
    <property type="method" value="X-ray"/>
    <property type="resolution" value="2.01 A"/>
    <property type="chains" value="A=235-488, B=46-179"/>
</dbReference>
<dbReference type="PDB" id="2J38">
    <property type="method" value="X-ray"/>
    <property type="resolution" value="2.10 A"/>
    <property type="chains" value="A=235-488, B=46-179"/>
</dbReference>
<dbReference type="PDB" id="2J4I">
    <property type="method" value="X-ray"/>
    <property type="resolution" value="1.80 A"/>
    <property type="chains" value="A=235-488, B=46-179"/>
</dbReference>
<dbReference type="PDB" id="2J94">
    <property type="method" value="X-ray"/>
    <property type="resolution" value="2.10 A"/>
    <property type="chains" value="A=235-488, B=46-179"/>
</dbReference>
<dbReference type="PDB" id="2J95">
    <property type="method" value="X-ray"/>
    <property type="resolution" value="2.01 A"/>
    <property type="chains" value="A=235-488, B=46-179"/>
</dbReference>
<dbReference type="PDB" id="2JKH">
    <property type="method" value="X-ray"/>
    <property type="resolution" value="1.25 A"/>
    <property type="chains" value="A=235-475, L=126-180"/>
</dbReference>
<dbReference type="PDB" id="2P16">
    <property type="method" value="X-ray"/>
    <property type="resolution" value="2.30 A"/>
    <property type="chains" value="A=235-468, L=127-178"/>
</dbReference>
<dbReference type="PDB" id="2P3F">
    <property type="method" value="X-ray"/>
    <property type="resolution" value="3.10 A"/>
    <property type="chains" value="H=235-469, L=125-178"/>
</dbReference>
<dbReference type="PDB" id="2P3T">
    <property type="method" value="X-ray"/>
    <property type="resolution" value="1.92 A"/>
    <property type="chains" value="A=127-178, B=235-467"/>
</dbReference>
<dbReference type="PDB" id="2P3U">
    <property type="method" value="X-ray"/>
    <property type="resolution" value="1.62 A"/>
    <property type="chains" value="A=127-178, B=235-467"/>
</dbReference>
<dbReference type="PDB" id="2P93">
    <property type="method" value="X-ray"/>
    <property type="resolution" value="1.90 A"/>
    <property type="chains" value="A=235-468, L=127-178"/>
</dbReference>
<dbReference type="PDB" id="2P94">
    <property type="method" value="X-ray"/>
    <property type="resolution" value="1.80 A"/>
    <property type="chains" value="A=235-468, L=127-178"/>
</dbReference>
<dbReference type="PDB" id="2P95">
    <property type="method" value="X-ray"/>
    <property type="resolution" value="2.20 A"/>
    <property type="chains" value="A=235-468, L=127-178"/>
</dbReference>
<dbReference type="PDB" id="2PHB">
    <property type="method" value="X-ray"/>
    <property type="resolution" value="2.30 A"/>
    <property type="chains" value="A=235-468, B=128-178"/>
</dbReference>
<dbReference type="PDB" id="2PR3">
    <property type="method" value="X-ray"/>
    <property type="resolution" value="1.50 A"/>
    <property type="chains" value="A=235-468, B=128-178"/>
</dbReference>
<dbReference type="PDB" id="2Q1J">
    <property type="method" value="X-ray"/>
    <property type="resolution" value="1.90 A"/>
    <property type="chains" value="A=235-468, B=128-178"/>
</dbReference>
<dbReference type="PDB" id="2RA0">
    <property type="method" value="X-ray"/>
    <property type="resolution" value="2.30 A"/>
    <property type="chains" value="A=235-468, L=128-178"/>
</dbReference>
<dbReference type="PDB" id="2UWL">
    <property type="method" value="X-ray"/>
    <property type="resolution" value="1.90 A"/>
    <property type="chains" value="A=235-488, B=46-179"/>
</dbReference>
<dbReference type="PDB" id="2UWO">
    <property type="method" value="X-ray"/>
    <property type="resolution" value="1.75 A"/>
    <property type="chains" value="A=235-488, B=46-179"/>
</dbReference>
<dbReference type="PDB" id="2UWP">
    <property type="method" value="X-ray"/>
    <property type="resolution" value="1.75 A"/>
    <property type="chains" value="A=235-488, B=46-179"/>
</dbReference>
<dbReference type="PDB" id="2VH0">
    <property type="method" value="X-ray"/>
    <property type="resolution" value="1.70 A"/>
    <property type="chains" value="A=235-488, B=46-179"/>
</dbReference>
<dbReference type="PDB" id="2VH6">
    <property type="method" value="X-ray"/>
    <property type="resolution" value="1.95 A"/>
    <property type="chains" value="A=235-488, B=46-177"/>
</dbReference>
<dbReference type="PDB" id="2VVC">
    <property type="method" value="X-ray"/>
    <property type="resolution" value="1.95 A"/>
    <property type="chains" value="A/B=235-475, K/L=126-180"/>
</dbReference>
<dbReference type="PDB" id="2VVU">
    <property type="method" value="X-ray"/>
    <property type="resolution" value="2.30 A"/>
    <property type="chains" value="A=235-475, L=126-180"/>
</dbReference>
<dbReference type="PDB" id="2VVV">
    <property type="method" value="X-ray"/>
    <property type="resolution" value="1.73 A"/>
    <property type="chains" value="A=235-475, L=126-180"/>
</dbReference>
<dbReference type="PDB" id="2VWL">
    <property type="method" value="X-ray"/>
    <property type="resolution" value="1.80 A"/>
    <property type="chains" value="A=235-475, L=126-180"/>
</dbReference>
<dbReference type="PDB" id="2VWM">
    <property type="method" value="X-ray"/>
    <property type="resolution" value="1.96 A"/>
    <property type="chains" value="A/B=235-475, K/L=126-180"/>
</dbReference>
<dbReference type="PDB" id="2VWN">
    <property type="method" value="X-ray"/>
    <property type="resolution" value="1.61 A"/>
    <property type="chains" value="A=235-475, L=126-180"/>
</dbReference>
<dbReference type="PDB" id="2VWO">
    <property type="method" value="X-ray"/>
    <property type="resolution" value="1.60 A"/>
    <property type="chains" value="A=235-475, L=126-180"/>
</dbReference>
<dbReference type="PDB" id="2W26">
    <property type="method" value="X-ray"/>
    <property type="resolution" value="2.08 A"/>
    <property type="chains" value="A=235-468, B=129-177"/>
</dbReference>
<dbReference type="PDB" id="2W3I">
    <property type="method" value="X-ray"/>
    <property type="resolution" value="1.90 A"/>
    <property type="chains" value="A=235-468, B=128-178"/>
</dbReference>
<dbReference type="PDB" id="2W3K">
    <property type="method" value="X-ray"/>
    <property type="resolution" value="2.05 A"/>
    <property type="chains" value="A=235-468, B=128-178"/>
</dbReference>
<dbReference type="PDB" id="2WYG">
    <property type="method" value="X-ray"/>
    <property type="resolution" value="1.88 A"/>
    <property type="chains" value="A=235-487, B=46-179"/>
</dbReference>
<dbReference type="PDB" id="2WYJ">
    <property type="method" value="X-ray"/>
    <property type="resolution" value="2.38 A"/>
    <property type="chains" value="A=235-488, B=46-179"/>
</dbReference>
<dbReference type="PDB" id="2XBV">
    <property type="method" value="X-ray"/>
    <property type="resolution" value="1.66 A"/>
    <property type="chains" value="A=235-475, L=126-180"/>
</dbReference>
<dbReference type="PDB" id="2XBW">
    <property type="method" value="X-ray"/>
    <property type="resolution" value="1.72 A"/>
    <property type="chains" value="A=235-475, L=126-180"/>
</dbReference>
<dbReference type="PDB" id="2XBX">
    <property type="method" value="X-ray"/>
    <property type="resolution" value="1.85 A"/>
    <property type="chains" value="A=235-475, L=126-180"/>
</dbReference>
<dbReference type="PDB" id="2XBY">
    <property type="method" value="X-ray"/>
    <property type="resolution" value="2.02 A"/>
    <property type="chains" value="A=235-475, L=126-180"/>
</dbReference>
<dbReference type="PDB" id="2XC0">
    <property type="method" value="X-ray"/>
    <property type="resolution" value="2.05 A"/>
    <property type="chains" value="A=235-475, L=126-180"/>
</dbReference>
<dbReference type="PDB" id="2XC4">
    <property type="method" value="X-ray"/>
    <property type="resolution" value="1.67 A"/>
    <property type="chains" value="A=235-475, L=126-180"/>
</dbReference>
<dbReference type="PDB" id="2XC5">
    <property type="method" value="X-ray"/>
    <property type="resolution" value="1.70 A"/>
    <property type="chains" value="A=235-475, L=126-180"/>
</dbReference>
<dbReference type="PDB" id="2Y5F">
    <property type="method" value="X-ray"/>
    <property type="resolution" value="1.29 A"/>
    <property type="chains" value="A=235-468, L=127-180"/>
</dbReference>
<dbReference type="PDB" id="2Y5G">
    <property type="method" value="X-ray"/>
    <property type="resolution" value="1.29 A"/>
    <property type="chains" value="A=235-468, L=127-180"/>
</dbReference>
<dbReference type="PDB" id="2Y5H">
    <property type="method" value="X-ray"/>
    <property type="resolution" value="1.33 A"/>
    <property type="chains" value="A=235-468, L=127-180"/>
</dbReference>
<dbReference type="PDB" id="2Y7X">
    <property type="method" value="X-ray"/>
    <property type="resolution" value="1.90 A"/>
    <property type="chains" value="A=235-488, B=46-179"/>
</dbReference>
<dbReference type="PDB" id="2Y7Z">
    <property type="method" value="X-ray"/>
    <property type="resolution" value="1.84 A"/>
    <property type="chains" value="A=235-488, B=46-179"/>
</dbReference>
<dbReference type="PDB" id="2Y80">
    <property type="method" value="X-ray"/>
    <property type="resolution" value="1.90 A"/>
    <property type="chains" value="A=235-488, B=46-179"/>
</dbReference>
<dbReference type="PDB" id="2Y81">
    <property type="method" value="X-ray"/>
    <property type="resolution" value="1.70 A"/>
    <property type="chains" value="A=235-488, B=46-179"/>
</dbReference>
<dbReference type="PDB" id="2Y82">
    <property type="method" value="X-ray"/>
    <property type="resolution" value="2.20 A"/>
    <property type="chains" value="A=235-488, B=46-179"/>
</dbReference>
<dbReference type="PDB" id="3CEN">
    <property type="method" value="X-ray"/>
    <property type="resolution" value="1.60 A"/>
    <property type="chains" value="A=235-468, L=127-178"/>
</dbReference>
<dbReference type="PDB" id="3CS7">
    <property type="method" value="X-ray"/>
    <property type="resolution" value="2.20 A"/>
    <property type="chains" value="A=235-468, L=127-178"/>
</dbReference>
<dbReference type="PDB" id="3ENS">
    <property type="method" value="X-ray"/>
    <property type="resolution" value="2.30 A"/>
    <property type="chains" value="A/C=85-178, B/D=235-472"/>
</dbReference>
<dbReference type="PDB" id="3FFG">
    <property type="method" value="X-ray"/>
    <property type="resolution" value="1.54 A"/>
    <property type="chains" value="A=235-468, L=127-178"/>
</dbReference>
<dbReference type="PDB" id="3HPT">
    <property type="method" value="X-ray"/>
    <property type="resolution" value="2.19 A"/>
    <property type="chains" value="A/C=85-178, B/D=235-472"/>
</dbReference>
<dbReference type="PDB" id="3IIT">
    <property type="method" value="X-ray"/>
    <property type="resolution" value="1.80 A"/>
    <property type="chains" value="A=235-467, B=125-178"/>
</dbReference>
<dbReference type="PDB" id="3K9X">
    <property type="method" value="X-ray"/>
    <property type="resolution" value="1.90 A"/>
    <property type="chains" value="A/C=85-178, B/D=235-472"/>
</dbReference>
<dbReference type="PDB" id="3KL6">
    <property type="method" value="X-ray"/>
    <property type="resolution" value="1.45 A"/>
    <property type="chains" value="A=235-475, B=126-179"/>
</dbReference>
<dbReference type="PDB" id="3KQB">
    <property type="method" value="X-ray"/>
    <property type="resolution" value="2.25 A"/>
    <property type="chains" value="A=235-468, L=127-178"/>
</dbReference>
<dbReference type="PDB" id="3KQC">
    <property type="method" value="X-ray"/>
    <property type="resolution" value="2.20 A"/>
    <property type="chains" value="A=235-468, L=127-178"/>
</dbReference>
<dbReference type="PDB" id="3KQD">
    <property type="method" value="X-ray"/>
    <property type="resolution" value="2.75 A"/>
    <property type="chains" value="A=235-468, L=127-178"/>
</dbReference>
<dbReference type="PDB" id="3KQE">
    <property type="method" value="X-ray"/>
    <property type="resolution" value="2.35 A"/>
    <property type="chains" value="A=235-468, L=127-178"/>
</dbReference>
<dbReference type="PDB" id="3LIW">
    <property type="method" value="X-ray"/>
    <property type="resolution" value="2.22 A"/>
    <property type="chains" value="A=235-468, B=128-178"/>
</dbReference>
<dbReference type="PDB" id="3M36">
    <property type="method" value="X-ray"/>
    <property type="resolution" value="2.15 A"/>
    <property type="chains" value="A=235-468, L=127-178"/>
</dbReference>
<dbReference type="PDB" id="3M37">
    <property type="method" value="X-ray"/>
    <property type="resolution" value="1.90 A"/>
    <property type="chains" value="A=235-468, L=127-178"/>
</dbReference>
<dbReference type="PDB" id="3Q3K">
    <property type="method" value="X-ray"/>
    <property type="resolution" value="2.00 A"/>
    <property type="chains" value="A=235-467, B=125-178"/>
</dbReference>
<dbReference type="PDB" id="3SW2">
    <property type="method" value="X-ray"/>
    <property type="resolution" value="2.42 A"/>
    <property type="chains" value="A=85-178, B=235-472"/>
</dbReference>
<dbReference type="PDB" id="3TK5">
    <property type="method" value="X-ray"/>
    <property type="resolution" value="2.20 A"/>
    <property type="chains" value="A=235-467, B=125-178"/>
</dbReference>
<dbReference type="PDB" id="3TK6">
    <property type="method" value="X-ray"/>
    <property type="resolution" value="1.80 A"/>
    <property type="chains" value="A=235-467, B=125-178"/>
</dbReference>
<dbReference type="PDB" id="4A7I">
    <property type="method" value="X-ray"/>
    <property type="resolution" value="2.40 A"/>
    <property type="chains" value="A=84-179, B=235-488"/>
</dbReference>
<dbReference type="PDB" id="4BTI">
    <property type="method" value="X-ray"/>
    <property type="resolution" value="2.30 A"/>
    <property type="chains" value="A/E=84-179, B/F=235-488"/>
</dbReference>
<dbReference type="PDB" id="4BTT">
    <property type="method" value="X-ray"/>
    <property type="resolution" value="2.59 A"/>
    <property type="chains" value="A/E=84-179, B/F=235-488"/>
</dbReference>
<dbReference type="PDB" id="4BTU">
    <property type="method" value="X-ray"/>
    <property type="resolution" value="2.37 A"/>
    <property type="chains" value="A/E=84-179, B/F=235-488"/>
</dbReference>
<dbReference type="PDB" id="4Y6D">
    <property type="method" value="X-ray"/>
    <property type="resolution" value="1.55 A"/>
    <property type="chains" value="A=235-488, B=46-179"/>
</dbReference>
<dbReference type="PDB" id="4Y71">
    <property type="method" value="X-ray"/>
    <property type="resolution" value="1.80 A"/>
    <property type="chains" value="A=235-488, B=46-179"/>
</dbReference>
<dbReference type="PDB" id="4Y76">
    <property type="method" value="X-ray"/>
    <property type="resolution" value="2.00 A"/>
    <property type="chains" value="A=235-488, B=46-179"/>
</dbReference>
<dbReference type="PDB" id="4Y79">
    <property type="method" value="X-ray"/>
    <property type="resolution" value="2.10 A"/>
    <property type="chains" value="A=235-488, B=46-179"/>
</dbReference>
<dbReference type="PDB" id="4Y7A">
    <property type="method" value="X-ray"/>
    <property type="resolution" value="1.99 A"/>
    <property type="chains" value="A=235-488, B=46-179"/>
</dbReference>
<dbReference type="PDB" id="4Y7B">
    <property type="method" value="X-ray"/>
    <property type="resolution" value="1.79 A"/>
    <property type="chains" value="A=235-488, B=46-179"/>
</dbReference>
<dbReference type="PDB" id="4ZH8">
    <property type="method" value="X-ray"/>
    <property type="resolution" value="1.80 A"/>
    <property type="chains" value="A=235-488, B=46-179"/>
</dbReference>
<dbReference type="PDB" id="4ZHA">
    <property type="method" value="X-ray"/>
    <property type="resolution" value="1.86 A"/>
    <property type="chains" value="A=235-488, B=46-179"/>
</dbReference>
<dbReference type="PDB" id="5JQY">
    <property type="method" value="X-ray"/>
    <property type="resolution" value="1.99 A"/>
    <property type="chains" value="B=86-124"/>
</dbReference>
<dbReference type="PDB" id="5JTC">
    <property type="method" value="X-ray"/>
    <property type="resolution" value="2.24 A"/>
    <property type="chains" value="B=86-124"/>
</dbReference>
<dbReference type="PDB" id="5JZ8">
    <property type="method" value="X-ray"/>
    <property type="resolution" value="2.10 A"/>
    <property type="chains" value="B=86-124"/>
</dbReference>
<dbReference type="PDB" id="5JZU">
    <property type="method" value="X-ray"/>
    <property type="resolution" value="2.50 A"/>
    <property type="chains" value="B=86-111"/>
</dbReference>
<dbReference type="PDB" id="5K0H">
    <property type="method" value="X-ray"/>
    <property type="resolution" value="2.20 A"/>
    <property type="chains" value="A=235-468, B=128-178"/>
</dbReference>
<dbReference type="PDB" id="5VOE">
    <property type="method" value="X-ray"/>
    <property type="resolution" value="2.00 A"/>
    <property type="chains" value="H=235-467, L=128-178"/>
</dbReference>
<dbReference type="PDB" id="5VOF">
    <property type="method" value="X-ray"/>
    <property type="resolution" value="2.25 A"/>
    <property type="chains" value="H=235-467, L=128-178"/>
</dbReference>
<dbReference type="PDB" id="6Q9F">
    <property type="method" value="X-ray"/>
    <property type="resolution" value="1.63 A"/>
    <property type="chains" value="B=86-124"/>
</dbReference>
<dbReference type="PDB" id="6Q9I">
    <property type="method" value="X-ray"/>
    <property type="resolution" value="1.85 A"/>
    <property type="chains" value="B=86-124"/>
</dbReference>
<dbReference type="PDB" id="6RK9">
    <property type="method" value="X-ray"/>
    <property type="resolution" value="2.29 A"/>
    <property type="chains" value="B=102-119"/>
</dbReference>
<dbReference type="PDB" id="6YYW">
    <property type="method" value="X-ray"/>
    <property type="resolution" value="2.27 A"/>
    <property type="chains" value="B=86-124"/>
</dbReference>
<dbReference type="PDB" id="6YYX">
    <property type="method" value="X-ray"/>
    <property type="resolution" value="1.53 A"/>
    <property type="chains" value="B=86-124"/>
</dbReference>
<dbReference type="PDB" id="6YYY">
    <property type="method" value="X-ray"/>
    <property type="resolution" value="2.29 A"/>
    <property type="chains" value="B=86-124"/>
</dbReference>
<dbReference type="PDB" id="6Z6Q">
    <property type="method" value="X-ray"/>
    <property type="resolution" value="1.81 A"/>
    <property type="chains" value="B=86-124"/>
</dbReference>
<dbReference type="PDB" id="6Z6R">
    <property type="method" value="X-ray"/>
    <property type="resolution" value="2.13 A"/>
    <property type="chains" value="B=86-124"/>
</dbReference>
<dbReference type="PDB" id="7AHU">
    <property type="method" value="X-ray"/>
    <property type="resolution" value="2.60 A"/>
    <property type="chains" value="C/E=235-475, D/F=126-182"/>
</dbReference>
<dbReference type="PDB" id="7BMI">
    <property type="method" value="X-ray"/>
    <property type="resolution" value="1.66 A"/>
    <property type="chains" value="B=86-124"/>
</dbReference>
<dbReference type="PDB" id="7BMJ">
    <property type="method" value="X-ray"/>
    <property type="resolution" value="1.75 A"/>
    <property type="chains" value="B=86-124"/>
</dbReference>
<dbReference type="PDB" id="7E6J">
    <property type="method" value="X-ray"/>
    <property type="resolution" value="1.90 A"/>
    <property type="chains" value="B=86-124"/>
</dbReference>
<dbReference type="PDB" id="7TPP">
    <property type="method" value="EM"/>
    <property type="resolution" value="4.10 A"/>
    <property type="chains" value="A=41-179, B=235-488"/>
</dbReference>
<dbReference type="PDB" id="7YB8">
    <property type="method" value="X-ray"/>
    <property type="resolution" value="1.98 A"/>
    <property type="chains" value="B=86-124"/>
</dbReference>
<dbReference type="PDB" id="7YB9">
    <property type="method" value="X-ray"/>
    <property type="resolution" value="1.54 A"/>
    <property type="chains" value="B=86-124"/>
</dbReference>
<dbReference type="PDB" id="7YBB">
    <property type="method" value="X-ray"/>
    <property type="resolution" value="1.68 A"/>
    <property type="chains" value="B=86-124"/>
</dbReference>
<dbReference type="PDB" id="7YBC">
    <property type="method" value="X-ray"/>
    <property type="resolution" value="1.84 A"/>
    <property type="chains" value="B=86-124"/>
</dbReference>
<dbReference type="PDB" id="8EOK">
    <property type="method" value="EM"/>
    <property type="resolution" value="3.53 A"/>
    <property type="chains" value="C=235-488, L=46-179"/>
</dbReference>
<dbReference type="PDB" id="8RE5">
    <property type="method" value="X-ray"/>
    <property type="resolution" value="1.70 A"/>
    <property type="chains" value="B=86-124"/>
</dbReference>
<dbReference type="PDB" id="8RE6">
    <property type="method" value="X-ray"/>
    <property type="resolution" value="1.92 A"/>
    <property type="chains" value="B=86-124"/>
</dbReference>
<dbReference type="PDB" id="8RE7">
    <property type="method" value="X-ray"/>
    <property type="resolution" value="1.95 A"/>
    <property type="chains" value="B=86-124"/>
</dbReference>
<dbReference type="PDB" id="8RE8">
    <property type="method" value="X-ray"/>
    <property type="resolution" value="1.85 A"/>
    <property type="chains" value="B=86-124"/>
</dbReference>
<dbReference type="PDB" id="8RE9">
    <property type="method" value="X-ray"/>
    <property type="resolution" value="1.84 A"/>
    <property type="chains" value="B=86-124"/>
</dbReference>
<dbReference type="PDB" id="9BVL">
    <property type="method" value="EM"/>
    <property type="resolution" value="3.40 A"/>
    <property type="chains" value="P=22-85"/>
</dbReference>
<dbReference type="PDB" id="9CLI">
    <property type="method" value="EM"/>
    <property type="resolution" value="3.61 A"/>
    <property type="chains" value="Z=1-488"/>
</dbReference>
<dbReference type="PDB" id="9CM2">
    <property type="method" value="EM"/>
    <property type="resolution" value="5.01 A"/>
    <property type="chains" value="Z=1-488"/>
</dbReference>
<dbReference type="PDB" id="9CM9">
    <property type="method" value="EM"/>
    <property type="resolution" value="4.00 A"/>
    <property type="chains" value="Z=1-488"/>
</dbReference>
<dbReference type="PDB" id="9CTH">
    <property type="method" value="EM"/>
    <property type="resolution" value="6.47 A"/>
    <property type="chains" value="B=41-182, C=235-469"/>
</dbReference>
<dbReference type="PDBsum" id="1C5M"/>
<dbReference type="PDBsum" id="1EZQ"/>
<dbReference type="PDBsum" id="1F0R"/>
<dbReference type="PDBsum" id="1F0S"/>
<dbReference type="PDBsum" id="1FAX"/>
<dbReference type="PDBsum" id="1FJS"/>
<dbReference type="PDBsum" id="1FXY"/>
<dbReference type="PDBsum" id="1G2L"/>
<dbReference type="PDBsum" id="1G2M"/>
<dbReference type="PDBsum" id="1HCG"/>
<dbReference type="PDBsum" id="1IOE"/>
<dbReference type="PDBsum" id="1IQE"/>
<dbReference type="PDBsum" id="1IQF"/>
<dbReference type="PDBsum" id="1IQG"/>
<dbReference type="PDBsum" id="1IQH"/>
<dbReference type="PDBsum" id="1IQI"/>
<dbReference type="PDBsum" id="1IQJ"/>
<dbReference type="PDBsum" id="1IQK"/>
<dbReference type="PDBsum" id="1IQL"/>
<dbReference type="PDBsum" id="1IQM"/>
<dbReference type="PDBsum" id="1IQN"/>
<dbReference type="PDBsum" id="1KSN"/>
<dbReference type="PDBsum" id="1LPG"/>
<dbReference type="PDBsum" id="1LPK"/>
<dbReference type="PDBsum" id="1LPZ"/>
<dbReference type="PDBsum" id="1LQD"/>
<dbReference type="PDBsum" id="1MQ5"/>
<dbReference type="PDBsum" id="1MQ6"/>
<dbReference type="PDBsum" id="1NFU"/>
<dbReference type="PDBsum" id="1NFW"/>
<dbReference type="PDBsum" id="1NFX"/>
<dbReference type="PDBsum" id="1NFY"/>
<dbReference type="PDBsum" id="1P0S"/>
<dbReference type="PDBsum" id="1V3X"/>
<dbReference type="PDBsum" id="1WU1"/>
<dbReference type="PDBsum" id="1XKA"/>
<dbReference type="PDBsum" id="1XKB"/>
<dbReference type="PDBsum" id="1Z6E"/>
<dbReference type="PDBsum" id="2BMG"/>
<dbReference type="PDBsum" id="2BOH"/>
<dbReference type="PDBsum" id="2BOK"/>
<dbReference type="PDBsum" id="2BQ6"/>
<dbReference type="PDBsum" id="2BQ7"/>
<dbReference type="PDBsum" id="2BQW"/>
<dbReference type="PDBsum" id="2CJI"/>
<dbReference type="PDBsum" id="2D1J"/>
<dbReference type="PDBsum" id="2EI6"/>
<dbReference type="PDBsum" id="2EI7"/>
<dbReference type="PDBsum" id="2EI8"/>
<dbReference type="PDBsum" id="2FZZ"/>
<dbReference type="PDBsum" id="2G00"/>
<dbReference type="PDBsum" id="2GD4"/>
<dbReference type="PDBsum" id="2H9E"/>
<dbReference type="PDBsum" id="2J2U"/>
<dbReference type="PDBsum" id="2J34"/>
<dbReference type="PDBsum" id="2J38"/>
<dbReference type="PDBsum" id="2J4I"/>
<dbReference type="PDBsum" id="2J94"/>
<dbReference type="PDBsum" id="2J95"/>
<dbReference type="PDBsum" id="2JKH"/>
<dbReference type="PDBsum" id="2P16"/>
<dbReference type="PDBsum" id="2P3F"/>
<dbReference type="PDBsum" id="2P3T"/>
<dbReference type="PDBsum" id="2P3U"/>
<dbReference type="PDBsum" id="2P93"/>
<dbReference type="PDBsum" id="2P94"/>
<dbReference type="PDBsum" id="2P95"/>
<dbReference type="PDBsum" id="2PHB"/>
<dbReference type="PDBsum" id="2PR3"/>
<dbReference type="PDBsum" id="2Q1J"/>
<dbReference type="PDBsum" id="2RA0"/>
<dbReference type="PDBsum" id="2UWL"/>
<dbReference type="PDBsum" id="2UWO"/>
<dbReference type="PDBsum" id="2UWP"/>
<dbReference type="PDBsum" id="2VH0"/>
<dbReference type="PDBsum" id="2VH6"/>
<dbReference type="PDBsum" id="2VVC"/>
<dbReference type="PDBsum" id="2VVU"/>
<dbReference type="PDBsum" id="2VVV"/>
<dbReference type="PDBsum" id="2VWL"/>
<dbReference type="PDBsum" id="2VWM"/>
<dbReference type="PDBsum" id="2VWN"/>
<dbReference type="PDBsum" id="2VWO"/>
<dbReference type="PDBsum" id="2W26"/>
<dbReference type="PDBsum" id="2W3I"/>
<dbReference type="PDBsum" id="2W3K"/>
<dbReference type="PDBsum" id="2WYG"/>
<dbReference type="PDBsum" id="2WYJ"/>
<dbReference type="PDBsum" id="2XBV"/>
<dbReference type="PDBsum" id="2XBW"/>
<dbReference type="PDBsum" id="2XBX"/>
<dbReference type="PDBsum" id="2XBY"/>
<dbReference type="PDBsum" id="2XC0"/>
<dbReference type="PDBsum" id="2XC4"/>
<dbReference type="PDBsum" id="2XC5"/>
<dbReference type="PDBsum" id="2Y5F"/>
<dbReference type="PDBsum" id="2Y5G"/>
<dbReference type="PDBsum" id="2Y5H"/>
<dbReference type="PDBsum" id="2Y7X"/>
<dbReference type="PDBsum" id="2Y7Z"/>
<dbReference type="PDBsum" id="2Y80"/>
<dbReference type="PDBsum" id="2Y81"/>
<dbReference type="PDBsum" id="2Y82"/>
<dbReference type="PDBsum" id="3CEN"/>
<dbReference type="PDBsum" id="3CS7"/>
<dbReference type="PDBsum" id="3ENS"/>
<dbReference type="PDBsum" id="3FFG"/>
<dbReference type="PDBsum" id="3HPT"/>
<dbReference type="PDBsum" id="3IIT"/>
<dbReference type="PDBsum" id="3K9X"/>
<dbReference type="PDBsum" id="3KL6"/>
<dbReference type="PDBsum" id="3KQB"/>
<dbReference type="PDBsum" id="3KQC"/>
<dbReference type="PDBsum" id="3KQD"/>
<dbReference type="PDBsum" id="3KQE"/>
<dbReference type="PDBsum" id="3LIW"/>
<dbReference type="PDBsum" id="3M36"/>
<dbReference type="PDBsum" id="3M37"/>
<dbReference type="PDBsum" id="3Q3K"/>
<dbReference type="PDBsum" id="3SW2"/>
<dbReference type="PDBsum" id="3TK5"/>
<dbReference type="PDBsum" id="3TK6"/>
<dbReference type="PDBsum" id="4A7I"/>
<dbReference type="PDBsum" id="4BTI"/>
<dbReference type="PDBsum" id="4BTT"/>
<dbReference type="PDBsum" id="4BTU"/>
<dbReference type="PDBsum" id="4Y6D"/>
<dbReference type="PDBsum" id="4Y71"/>
<dbReference type="PDBsum" id="4Y76"/>
<dbReference type="PDBsum" id="4Y79"/>
<dbReference type="PDBsum" id="4Y7A"/>
<dbReference type="PDBsum" id="4Y7B"/>
<dbReference type="PDBsum" id="4ZH8"/>
<dbReference type="PDBsum" id="4ZHA"/>
<dbReference type="PDBsum" id="5JQY"/>
<dbReference type="PDBsum" id="5JTC"/>
<dbReference type="PDBsum" id="5JZ8"/>
<dbReference type="PDBsum" id="5JZU"/>
<dbReference type="PDBsum" id="5K0H"/>
<dbReference type="PDBsum" id="5VOE"/>
<dbReference type="PDBsum" id="5VOF"/>
<dbReference type="PDBsum" id="6Q9F"/>
<dbReference type="PDBsum" id="6Q9I"/>
<dbReference type="PDBsum" id="6RK9"/>
<dbReference type="PDBsum" id="6YYW"/>
<dbReference type="PDBsum" id="6YYX"/>
<dbReference type="PDBsum" id="6YYY"/>
<dbReference type="PDBsum" id="6Z6Q"/>
<dbReference type="PDBsum" id="6Z6R"/>
<dbReference type="PDBsum" id="7AHU"/>
<dbReference type="PDBsum" id="7BMI"/>
<dbReference type="PDBsum" id="7BMJ"/>
<dbReference type="PDBsum" id="7E6J"/>
<dbReference type="PDBsum" id="7TPP"/>
<dbReference type="PDBsum" id="7YB8"/>
<dbReference type="PDBsum" id="7YB9"/>
<dbReference type="PDBsum" id="7YBB"/>
<dbReference type="PDBsum" id="7YBC"/>
<dbReference type="PDBsum" id="8EOK"/>
<dbReference type="PDBsum" id="8RE5"/>
<dbReference type="PDBsum" id="8RE6"/>
<dbReference type="PDBsum" id="8RE7"/>
<dbReference type="PDBsum" id="8RE8"/>
<dbReference type="PDBsum" id="8RE9"/>
<dbReference type="PDBsum" id="9BVL"/>
<dbReference type="PDBsum" id="9CLI"/>
<dbReference type="PDBsum" id="9CM2"/>
<dbReference type="PDBsum" id="9CM9"/>
<dbReference type="PDBsum" id="9CTH"/>
<dbReference type="EMDB" id="EMD-26060"/>
<dbReference type="EMDB" id="EMD-26061"/>
<dbReference type="EMDB" id="EMD-28378"/>
<dbReference type="EMDB" id="EMD-44936"/>
<dbReference type="EMDB" id="EMD-45675"/>
<dbReference type="EMDB" id="EMD-45737"/>
<dbReference type="SMR" id="P00742"/>
<dbReference type="BioGRID" id="108457">
    <property type="interactions" value="46"/>
</dbReference>
<dbReference type="ComplexPortal" id="CPX-6215">
    <property type="entry name" value="Coagulation factor Xa complex"/>
</dbReference>
<dbReference type="CORUM" id="P00742"/>
<dbReference type="DIP" id="DIP-29896N"/>
<dbReference type="ELM" id="P00742"/>
<dbReference type="FunCoup" id="P00742">
    <property type="interactions" value="224"/>
</dbReference>
<dbReference type="IntAct" id="P00742">
    <property type="interactions" value="26"/>
</dbReference>
<dbReference type="MINT" id="P00742"/>
<dbReference type="STRING" id="9606.ENSP00000364709"/>
<dbReference type="BindingDB" id="P00742"/>
<dbReference type="ChEMBL" id="CHEMBL244"/>
<dbReference type="DrugBank" id="DB07211">
    <property type="generic name" value="(2R)-2-(5-CHLORO-2-THIENYL)-N-{(3S)-1-[(1S)-1-METHYL-2-MORPHOLIN-4-YL-2-OXOETHYL]-2-OXOPYRROLIDIN-3-YL}PROPENE-1-SULFONAMIDE"/>
</dbReference>
<dbReference type="DrugBank" id="DB08746">
    <property type="generic name" value="1-[[(1E)-2-(4-CHLOROPHENYL)ETHENYL]SULFONYL]-4-[[1-(4-PYRIDINYL)-4-PIPERIDINYL]METHYL]PIPERAZINE"/>
</dbReference>
<dbReference type="DrugBank" id="DB07974">
    <property type="generic name" value="1-{2-[(4-CHLOROPHENYL)AMINO]-2-OXOETHYL}-N-(1-ISOPROPYLPIPERIDIN-4-YL)-1H-INDOLE-2-CARBOXAMIDE"/>
</dbReference>
<dbReference type="DrugBank" id="DB07277">
    <property type="generic name" value="2-(5-CHLORO-2-THIENYL)-N-{(3S)-1-[(1S)-1-METHYL-2-MORPHOLIN-4-YL-2-OXOETHYL]-2-OXOPYRROLIDIN-3-YL}ETHANESULFONAMIDE"/>
</dbReference>
<dbReference type="DrugBank" id="DB07605">
    <property type="generic name" value="2-({4-[(5-CHLORO-1H-INDOL-2-YL)SULFONYL]PIPERAZIN-1-YL}CARBONYL)THIENO[3,2-B]PYRIDINE 4-OXIDE"/>
</dbReference>
<dbReference type="DrugBank" id="DB08487">
    <property type="generic name" value="3-({4-[(6-CHLORO-1-BENZOTHIEN-2-YL)SULFONYL]-2-OXOPIPERAZIN-1-YL}METHYL)BENZENECARBOXIMIDAMIDE"/>
</dbReference>
<dbReference type="DrugBank" id="DB08495">
    <property type="generic name" value="4-({4-[(6-CHLORO-1-BENZOTHIEN-2-YL)SULFONYL]-2-OXOPIPERAZIN-1-YL}METHYL)BENZENECARBOXIMIDAMIDE"/>
</dbReference>
<dbReference type="DrugBank" id="DB04673">
    <property type="generic name" value="4-[(5-CHLOROINDOL-2-YL)SULFONYL]-2-(2-METHYLPROPYL)-1-[[5-(PYRIDIN-4-YL)PYRIMIDIN-2-YL]CARBONYL]PIPERAZINE"/>
</dbReference>
<dbReference type="DrugBank" id="DB08745">
    <property type="generic name" value="4-[[(1E)-2-(4-CHLOROPHENYL)ETHENYL]SULFONYL]-1-[[1-(4-PYRIDINYL)-4-PIPERIDINYL]METHYL]PIPERAZINONE"/>
</dbReference>
<dbReference type="DrugBank" id="DB08488">
    <property type="generic name" value="4-{[(E)-2-(5-CHLOROTHIEN-2-YL)VINYL]SULFONYL}-1-(1H-PYRROLO[3,2-C]PYRIDIN-2-YLMETHYL)PIPERAZIN-2-ONE"/>
</dbReference>
<dbReference type="DrugBank" id="DB07804">
    <property type="generic name" value="5-(5-CHLORO-2-THIENYL)-N-{(3S)-1-[(1S)-1-METHYL-2-MORPHOLIN-4-YL-2-OXOETHYL]-2-OXOPYRROLIDIN-3-YL}-1H-1,2,4-TRIAZOLE-3-SULFONAMIDE"/>
</dbReference>
<dbReference type="DrugBank" id="DB08174">
    <property type="generic name" value="5-CHLORO-N-((1R,2S)-2-(4-(2-OXOPYRIDIN-1(2H)-YL)BENZAMIDO) CYCLOPENTYL)THIOPHENE-2-CARBOXAMIDE"/>
</dbReference>
<dbReference type="DrugBank" id="DB08173">
    <property type="generic name" value="5-CHLORO-N-(2-(4-(2-OXOPYRIDIN-1(2H)-YL)BENZAMIDO)ETHYL)THIOPHENE-2-CARBOXAMIDE"/>
</dbReference>
<dbReference type="DrugBank" id="DB07872">
    <property type="generic name" value="5-chloro-N-[(3R)-1-(2-{[2-fluoro-4-(2-oxopyridin-1(2H)-yl)phenyl]amino}-2-oxoethyl)pyrrolidin-3-yl]thiophene-2-carboxamide"/>
</dbReference>
<dbReference type="DrugBank" id="DB07843">
    <property type="generic name" value="5-CHLORO-N-{(3S)-1-[(1S)-1-METHYL-2-MORPHOLIN-4-YL-2-OXOETHYL]-2-OXOPYRROLIDIN-3-YL}-1-BENZOTHIOPHENE-2-SULFONAMIDE"/>
</dbReference>
<dbReference type="DrugBank" id="DB07848">
    <property type="generic name" value="5-Chloro-N-{(3S)-1-[(2S)-1-(4-morpholinyl)-1-oxo-2-propanyl]-2-oxo-3-pyrrolidinyl}-1H-indole-2-sulfonamide"/>
</dbReference>
<dbReference type="DrugBank" id="DB07875">
    <property type="generic name" value="5-Chloro-thiophene-2-carboxylic acid ((3S,4S)-1-{[2-fluoro-4-(2-oxo-2H-pyridin-1-yl)-phenylcarbamoyl]-methyl}-4-hydroxy-pyrrolidin-3-yl)-amide"/>
</dbReference>
<dbReference type="DrugBank" id="DB08143">
    <property type="generic name" value="5-CHLORO-THIOPHENE-2-CARBOXYLIC ACID ((3S,4S)-4-FLUORO- 1-{[2-FLUORO-4-(2-OXO-2H-PYRIDIN-1-YL)-PHENYLCARBAMOYL]-METHYL}-PYRROLIDIN-3-YL)-AMIDE"/>
</dbReference>
<dbReference type="DrugBank" id="DB07847">
    <property type="generic name" value="6-CHLORO-N-{(3S)-1-[(1S)-1-METHYL-2-(4-MORPHOLINYL)-2-OXO ETHYL]-2-OXO-3-PYRROLIDINYL}-2-NAPHTHALENESULFONAMIDE"/>
</dbReference>
<dbReference type="DrugBank" id="DB07844">
    <property type="generic name" value="6-CHLORO-N-{(3S)-1-[(1S)-1-METHYL-2-MORPHOLIN-4-YL-2-OXOETHYL]-2-OXOPYRROLIDIN-3-YL}-1-BENZOTHIOPHENE-2-SULFONAMIDE"/>
</dbReference>
<dbReference type="DrugBank" id="DB13884">
    <property type="generic name" value="Albutrepenonacog alfa"/>
</dbReference>
<dbReference type="DrugBank" id="DB06552">
    <property type="generic name" value="Anpocogin"/>
</dbReference>
<dbReference type="DrugBank" id="DB13151">
    <property type="generic name" value="Anti-inhibitor coagulant complex"/>
</dbReference>
<dbReference type="DrugBank" id="DB13192">
    <property type="generic name" value="Antihemophilic factor human"/>
</dbReference>
<dbReference type="DrugBank" id="DB00025">
    <property type="generic name" value="Antihemophilic factor, human recombinant"/>
</dbReference>
<dbReference type="DrugBank" id="DB11166">
    <property type="generic name" value="Antithrombin Alfa"/>
</dbReference>
<dbReference type="DrugBank" id="DB06605">
    <property type="generic name" value="Apixaban"/>
</dbReference>
<dbReference type="DrugBank" id="DB09258">
    <property type="generic name" value="Bemiparin"/>
</dbReference>
<dbReference type="DrugBank" id="DB12364">
    <property type="generic name" value="Betrixaban"/>
</dbReference>
<dbReference type="DrugBank" id="DB00100">
    <property type="generic name" value="Coagulation Factor IX (Recombinant)"/>
</dbReference>
<dbReference type="DrugBank" id="DB13152">
    <property type="generic name" value="Coagulation Factor IX Human"/>
</dbReference>
<dbReference type="DrugBank" id="DB13150">
    <property type="generic name" value="Coagulation factor VII human"/>
</dbReference>
<dbReference type="DrugBank" id="DB00036">
    <property type="generic name" value="Coagulation factor VIIa Recombinant Human"/>
</dbReference>
<dbReference type="DrugBank" id="DB12289">
    <property type="generic name" value="Darexaban"/>
</dbReference>
<dbReference type="DrugBank" id="DB09075">
    <property type="generic name" value="Edoxaban"/>
</dbReference>
<dbReference type="DrugBank" id="DB16662">
    <property type="generic name" value="Efanesoctocog alfa"/>
</dbReference>
<dbReference type="DrugBank" id="DB13923">
    <property type="generic name" value="Emicizumab"/>
</dbReference>
<dbReference type="DrugBank" id="DB01225">
    <property type="generic name" value="Enoxaparin"/>
</dbReference>
<dbReference type="DrugBank" id="DB18393">
    <property type="generic name" value="EP-217609"/>
</dbReference>
<dbReference type="DrugBank" id="DB06920">
    <property type="generic name" value="Eribaxaban"/>
</dbReference>
<dbReference type="DrugBank" id="DB00569">
    <property type="generic name" value="Fondaparinux"/>
</dbReference>
<dbReference type="DrugBank" id="DB03847">
    <property type="generic name" value="gamma-carboxy-L-glutamic acid"/>
</dbReference>
<dbReference type="DrugBank" id="DB07278">
    <property type="generic name" value="GW-813893"/>
</dbReference>
<dbReference type="DrugBank" id="DB01109">
    <property type="generic name" value="Heparin"/>
</dbReference>
<dbReference type="DrugBank" id="DB06406">
    <property type="generic name" value="Idraparinux"/>
</dbReference>
<dbReference type="DrugBank" id="DB09332">
    <property type="generic name" value="Kappadione"/>
</dbReference>
<dbReference type="DrugBank" id="DB06245">
    <property type="generic name" value="Lanoteplase"/>
</dbReference>
<dbReference type="DrugBank" id="DB11984">
    <property type="generic name" value="Letaxaban"/>
</dbReference>
<dbReference type="DrugBank" id="DB13998">
    <property type="generic name" value="Lonoctocog alfa"/>
</dbReference>
<dbReference type="DrugBank" id="DB05713">
    <property type="generic name" value="LY-517717"/>
</dbReference>
<dbReference type="DrugBank" id="DB13616">
    <property type="generic name" value="Melagatran"/>
</dbReference>
<dbReference type="DrugBank" id="DB13999">
    <property type="generic name" value="Moroctocog alfa"/>
</dbReference>
<dbReference type="DrugBank" id="DB07630">
    <property type="generic name" value="N-((1R,2R)-2-(5-CHLORO-1H-INDOLE-2-CARBOXAMIDO)CYCLOHEXYL)-5-METHYL-4,5,6,7-TETRAHYDROTHIAZOLO[5,4-C]PYRIDINE-2-CARBOXAMIDE"/>
</dbReference>
<dbReference type="DrugBank" id="DB07629">
    <property type="generic name" value="N-((1R,2S)-2-(5-CHLORO-1H-INDOLE-2-CARBOXAMIDO)CYCLOHEXYL)-5-METHYL-4,5,6,7-TETRAHYDROTHIAZOLO[5,4-C]PYRIDINE-2-CARBOXAMIDE"/>
</dbReference>
<dbReference type="DrugBank" id="DB07973">
    <property type="generic name" value="N-(1-ISOPROPYLPIPERIDIN-4-YL)-1-(3-METHOXYBENZYL)-1H-INDOLE-2-CARBOXAMIDE"/>
</dbReference>
<dbReference type="DrugBank" id="DB07800">
    <property type="generic name" value="N-(2-(((5-CHLORO-2-PYRIDINYL)AMINO)SULFONYL)PHENYL)-4-(2-OXO-1(2H)-PYRIDINYL)BENZAMIDE"/>
</dbReference>
<dbReference type="DrugBank" id="DB12598">
    <property type="generic name" value="Nafamostat"/>
</dbReference>
<dbReference type="DrugBank" id="DB13933">
    <property type="generic name" value="Nonacog beta pegol"/>
</dbReference>
<dbReference type="DrugBank" id="DB13251">
    <property type="generic name" value="Octopamine"/>
</dbReference>
<dbReference type="DrugBank" id="DB06635">
    <property type="generic name" value="Otamixaban"/>
</dbReference>
<dbReference type="DrugBank" id="DB13149">
    <property type="generic name" value="Protein S human"/>
</dbReference>
<dbReference type="DrugBank" id="DB11311">
    <property type="generic name" value="Prothrombin"/>
</dbReference>
<dbReference type="DrugBank" id="DB00545">
    <property type="generic name" value="Pyridostigmine"/>
</dbReference>
<dbReference type="DrugBank" id="DB06228">
    <property type="generic name" value="Rivaroxaban"/>
</dbReference>
<dbReference type="DrugBank" id="DB05361">
    <property type="generic name" value="SR-123781A"/>
</dbReference>
<dbReference type="DrugBank" id="DB05362">
    <property type="generic name" value="SSR-126517E"/>
</dbReference>
<dbReference type="DrugBank" id="DB07261">
    <property type="generic name" value="THIENO[3,2-B]PYRIDINE-2-SULFONIC ACID [1-(1-AMINO-ISOQUINOLIN-7-YLMETHYL)-2-OXO-PYRROLDIN-3-YL]-AMIDE"/>
</dbReference>
<dbReference type="DrugBank" id="DB08426">
    <property type="generic name" value="THIENO[3,2-B]PYRIDINE-2-SULFONIC ACID [2-OXO-1-(1H-PYRROLO[2,3-C]PYRIDIN-2-YLMETHYL)-PYRROLIDIN-3-YL]-AMIDE"/>
</dbReference>
<dbReference type="DrugBank" id="DB09109">
    <property type="generic name" value="Turoctocog alfa"/>
</dbReference>
<dbReference type="DrugBank" id="DB14738">
    <property type="generic name" value="Turoctocog alfa pegol"/>
</dbReference>
<dbReference type="DrugBank" id="DB11869">
    <property type="generic name" value="Valspodar"/>
</dbReference>
<dbReference type="DrugCentral" id="P00742"/>
<dbReference type="GuidetoPHARMACOLOGY" id="2359"/>
<dbReference type="MEROPS" id="S01.216"/>
<dbReference type="GlyConnect" id="102">
    <property type="glycosylation" value="16 N-Linked glycans (2 sites), 1 O-Linked glycan"/>
</dbReference>
<dbReference type="GlyCosmos" id="P00742">
    <property type="glycosylation" value="13 sites, 30 glycans"/>
</dbReference>
<dbReference type="GlyGen" id="P00742">
    <property type="glycosylation" value="14 sites, 29 N-linked glycans (2 sites), 6 O-linked glycans (11 sites)"/>
</dbReference>
<dbReference type="iPTMnet" id="P00742"/>
<dbReference type="PhosphoSitePlus" id="P00742"/>
<dbReference type="BioMuta" id="F10"/>
<dbReference type="DMDM" id="119761"/>
<dbReference type="CPTAC" id="non-CPTAC-2649"/>
<dbReference type="jPOST" id="P00742"/>
<dbReference type="MassIVE" id="P00742"/>
<dbReference type="PaxDb" id="9606-ENSP00000364709"/>
<dbReference type="PeptideAtlas" id="P00742"/>
<dbReference type="ProteomicsDB" id="51275"/>
<dbReference type="Pumba" id="P00742"/>
<dbReference type="Antibodypedia" id="11687">
    <property type="antibodies" value="686 antibodies from 35 providers"/>
</dbReference>
<dbReference type="DNASU" id="2159"/>
<dbReference type="Ensembl" id="ENST00000375559.8">
    <property type="protein sequence ID" value="ENSP00000364709.3"/>
    <property type="gene ID" value="ENSG00000126218.12"/>
</dbReference>
<dbReference type="GeneID" id="2159"/>
<dbReference type="KEGG" id="hsa:2159"/>
<dbReference type="MANE-Select" id="ENST00000375559.8">
    <property type="protein sequence ID" value="ENSP00000364709.3"/>
    <property type="RefSeq nucleotide sequence ID" value="NM_000504.4"/>
    <property type="RefSeq protein sequence ID" value="NP_000495.1"/>
</dbReference>
<dbReference type="AGR" id="HGNC:3528"/>
<dbReference type="CTD" id="2159"/>
<dbReference type="DisGeNET" id="2159"/>
<dbReference type="GeneCards" id="F10"/>
<dbReference type="HGNC" id="HGNC:3528">
    <property type="gene designation" value="F10"/>
</dbReference>
<dbReference type="HPA" id="ENSG00000126218">
    <property type="expression patterns" value="Tissue enhanced (liver)"/>
</dbReference>
<dbReference type="MalaCards" id="F10"/>
<dbReference type="MIM" id="227600">
    <property type="type" value="phenotype"/>
</dbReference>
<dbReference type="MIM" id="613872">
    <property type="type" value="gene"/>
</dbReference>
<dbReference type="neXtProt" id="NX_P00742"/>
<dbReference type="OpenTargets" id="ENSG00000126218"/>
<dbReference type="Orphanet" id="328">
    <property type="disease" value="Congenital factor X deficiency"/>
</dbReference>
<dbReference type="PharmGKB" id="PA27940"/>
<dbReference type="VEuPathDB" id="HostDB:ENSG00000126218"/>
<dbReference type="eggNOG" id="ENOG502QS4N">
    <property type="taxonomic scope" value="Eukaryota"/>
</dbReference>
<dbReference type="GeneTree" id="ENSGT00940000157694"/>
<dbReference type="HOGENOM" id="CLU_006842_19_5_1"/>
<dbReference type="InParanoid" id="P00742"/>
<dbReference type="OMA" id="QKDWAEA"/>
<dbReference type="OrthoDB" id="6380398at2759"/>
<dbReference type="PAN-GO" id="P00742">
    <property type="GO annotations" value="2 GO annotations based on evolutionary models"/>
</dbReference>
<dbReference type="PhylomeDB" id="P00742"/>
<dbReference type="TreeFam" id="TF327329"/>
<dbReference type="BioCyc" id="MetaCyc:HS05000-MONOMER"/>
<dbReference type="BRENDA" id="3.4.21.6">
    <property type="organism ID" value="2681"/>
</dbReference>
<dbReference type="PathwayCommons" id="P00742"/>
<dbReference type="Reactome" id="R-HSA-140834">
    <property type="pathway name" value="Extrinsic Pathway of Fibrin Clot Formation"/>
</dbReference>
<dbReference type="Reactome" id="R-HSA-140837">
    <property type="pathway name" value="Intrinsic Pathway of Fibrin Clot Formation"/>
</dbReference>
<dbReference type="Reactome" id="R-HSA-140875">
    <property type="pathway name" value="Common Pathway of Fibrin Clot Formation"/>
</dbReference>
<dbReference type="Reactome" id="R-HSA-159740">
    <property type="pathway name" value="Gamma-carboxylation of protein precursors"/>
</dbReference>
<dbReference type="Reactome" id="R-HSA-159763">
    <property type="pathway name" value="Transport of gamma-carboxylated protein precursors from the endoplasmic reticulum to the Golgi apparatus"/>
</dbReference>
<dbReference type="Reactome" id="R-HSA-159782">
    <property type="pathway name" value="Removal of aminoterminal propeptides from gamma-carboxylated proteins"/>
</dbReference>
<dbReference type="Reactome" id="R-HSA-9672383">
    <property type="pathway name" value="Defective factor IX causes thrombophilia"/>
</dbReference>
<dbReference type="Reactome" id="R-HSA-9672396">
    <property type="pathway name" value="Defective cofactor function of FVIIIa variant"/>
</dbReference>
<dbReference type="Reactome" id="R-HSA-9673202">
    <property type="pathway name" value="Defective F9 variant does not activate FX"/>
</dbReference>
<dbReference type="SABIO-RK" id="P00742"/>
<dbReference type="SignaLink" id="P00742"/>
<dbReference type="SIGNOR" id="P00742"/>
<dbReference type="BioGRID-ORCS" id="2159">
    <property type="hits" value="15 hits in 1160 CRISPR screens"/>
</dbReference>
<dbReference type="ChiTaRS" id="F10">
    <property type="organism name" value="human"/>
</dbReference>
<dbReference type="EvolutionaryTrace" id="P00742"/>
<dbReference type="GeneWiki" id="Factor_X"/>
<dbReference type="GenomeRNAi" id="2159"/>
<dbReference type="Pharos" id="P00742">
    <property type="development level" value="Tclin"/>
</dbReference>
<dbReference type="PRO" id="PR:P00742"/>
<dbReference type="Proteomes" id="UP000005640">
    <property type="component" value="Chromosome 13"/>
</dbReference>
<dbReference type="RNAct" id="P00742">
    <property type="molecule type" value="protein"/>
</dbReference>
<dbReference type="Bgee" id="ENSG00000126218">
    <property type="expression patterns" value="Expressed in right lobe of liver and 111 other cell types or tissues"/>
</dbReference>
<dbReference type="ExpressionAtlas" id="P00742">
    <property type="expression patterns" value="baseline and differential"/>
</dbReference>
<dbReference type="GO" id="GO:0005788">
    <property type="term" value="C:endoplasmic reticulum lumen"/>
    <property type="evidence" value="ECO:0000304"/>
    <property type="project" value="Reactome"/>
</dbReference>
<dbReference type="GO" id="GO:0009897">
    <property type="term" value="C:external side of plasma membrane"/>
    <property type="evidence" value="ECO:0000305"/>
    <property type="project" value="BHF-UCL"/>
</dbReference>
<dbReference type="GO" id="GO:0005576">
    <property type="term" value="C:extracellular region"/>
    <property type="evidence" value="ECO:0000304"/>
    <property type="project" value="Reactome"/>
</dbReference>
<dbReference type="GO" id="GO:0005615">
    <property type="term" value="C:extracellular space"/>
    <property type="evidence" value="ECO:0000318"/>
    <property type="project" value="GO_Central"/>
</dbReference>
<dbReference type="GO" id="GO:0005796">
    <property type="term" value="C:Golgi lumen"/>
    <property type="evidence" value="ECO:0000304"/>
    <property type="project" value="Reactome"/>
</dbReference>
<dbReference type="GO" id="GO:0005886">
    <property type="term" value="C:plasma membrane"/>
    <property type="evidence" value="ECO:0000304"/>
    <property type="project" value="Reactome"/>
</dbReference>
<dbReference type="GO" id="GO:0005509">
    <property type="term" value="F:calcium ion binding"/>
    <property type="evidence" value="ECO:0007669"/>
    <property type="project" value="InterPro"/>
</dbReference>
<dbReference type="GO" id="GO:0005543">
    <property type="term" value="F:phospholipid binding"/>
    <property type="evidence" value="ECO:0000314"/>
    <property type="project" value="BHF-UCL"/>
</dbReference>
<dbReference type="GO" id="GO:0004252">
    <property type="term" value="F:serine-type endopeptidase activity"/>
    <property type="evidence" value="ECO:0000314"/>
    <property type="project" value="BHF-UCL"/>
</dbReference>
<dbReference type="GO" id="GO:0007596">
    <property type="term" value="P:blood coagulation"/>
    <property type="evidence" value="ECO:0000318"/>
    <property type="project" value="GO_Central"/>
</dbReference>
<dbReference type="GO" id="GO:0030335">
    <property type="term" value="P:positive regulation of cell migration"/>
    <property type="evidence" value="ECO:0000304"/>
    <property type="project" value="BHF-UCL"/>
</dbReference>
<dbReference type="GO" id="GO:0032008">
    <property type="term" value="P:positive regulation of TOR signaling"/>
    <property type="evidence" value="ECO:0000314"/>
    <property type="project" value="BHF-UCL"/>
</dbReference>
<dbReference type="GO" id="GO:0006508">
    <property type="term" value="P:proteolysis"/>
    <property type="evidence" value="ECO:0007669"/>
    <property type="project" value="UniProtKB-KW"/>
</dbReference>
<dbReference type="CDD" id="cd00054">
    <property type="entry name" value="EGF_CA"/>
    <property type="match status" value="1"/>
</dbReference>
<dbReference type="CDD" id="cd00190">
    <property type="entry name" value="Tryp_SPc"/>
    <property type="match status" value="1"/>
</dbReference>
<dbReference type="FunFam" id="2.10.25.10:FF:000443">
    <property type="entry name" value="Coagulation factor X"/>
    <property type="match status" value="1"/>
</dbReference>
<dbReference type="FunFam" id="2.40.10.10:FF:000013">
    <property type="entry name" value="Coagulation factor X"/>
    <property type="match status" value="1"/>
</dbReference>
<dbReference type="FunFam" id="2.10.25.10:FF:000162">
    <property type="entry name" value="Coagulation factor X (Predicted)"/>
    <property type="match status" value="1"/>
</dbReference>
<dbReference type="FunFam" id="4.10.740.10:FF:000001">
    <property type="entry name" value="vitamin K-dependent protein S"/>
    <property type="match status" value="1"/>
</dbReference>
<dbReference type="Gene3D" id="4.10.740.10">
    <property type="entry name" value="Coagulation Factor IX"/>
    <property type="match status" value="1"/>
</dbReference>
<dbReference type="Gene3D" id="2.10.25.10">
    <property type="entry name" value="Laminin"/>
    <property type="match status" value="2"/>
</dbReference>
<dbReference type="Gene3D" id="2.40.10.10">
    <property type="entry name" value="Trypsin-like serine proteases"/>
    <property type="match status" value="2"/>
</dbReference>
<dbReference type="InterPro" id="IPR017857">
    <property type="entry name" value="Coagulation_fac-like_Gla_dom"/>
</dbReference>
<dbReference type="InterPro" id="IPR001881">
    <property type="entry name" value="EGF-like_Ca-bd_dom"/>
</dbReference>
<dbReference type="InterPro" id="IPR000742">
    <property type="entry name" value="EGF-like_dom"/>
</dbReference>
<dbReference type="InterPro" id="IPR000152">
    <property type="entry name" value="EGF-type_Asp/Asn_hydroxyl_site"/>
</dbReference>
<dbReference type="InterPro" id="IPR018097">
    <property type="entry name" value="EGF_Ca-bd_CS"/>
</dbReference>
<dbReference type="InterPro" id="IPR035972">
    <property type="entry name" value="GLA-like_dom_SF"/>
</dbReference>
<dbReference type="InterPro" id="IPR000294">
    <property type="entry name" value="GLA_domain"/>
</dbReference>
<dbReference type="InterPro" id="IPR012224">
    <property type="entry name" value="Pept_S1A_FX"/>
</dbReference>
<dbReference type="InterPro" id="IPR050442">
    <property type="entry name" value="Peptidase_S1_coag_factors"/>
</dbReference>
<dbReference type="InterPro" id="IPR009003">
    <property type="entry name" value="Peptidase_S1_PA"/>
</dbReference>
<dbReference type="InterPro" id="IPR043504">
    <property type="entry name" value="Peptidase_S1_PA_chymotrypsin"/>
</dbReference>
<dbReference type="InterPro" id="IPR001314">
    <property type="entry name" value="Peptidase_S1A"/>
</dbReference>
<dbReference type="InterPro" id="IPR001254">
    <property type="entry name" value="Trypsin_dom"/>
</dbReference>
<dbReference type="InterPro" id="IPR018114">
    <property type="entry name" value="TRYPSIN_HIS"/>
</dbReference>
<dbReference type="InterPro" id="IPR033116">
    <property type="entry name" value="TRYPSIN_SER"/>
</dbReference>
<dbReference type="PANTHER" id="PTHR24278">
    <property type="entry name" value="COAGULATION FACTOR"/>
    <property type="match status" value="1"/>
</dbReference>
<dbReference type="PANTHER" id="PTHR24278:SF28">
    <property type="entry name" value="COAGULATION FACTOR X"/>
    <property type="match status" value="1"/>
</dbReference>
<dbReference type="Pfam" id="PF00008">
    <property type="entry name" value="EGF"/>
    <property type="match status" value="1"/>
</dbReference>
<dbReference type="Pfam" id="PF14670">
    <property type="entry name" value="FXa_inhibition"/>
    <property type="match status" value="1"/>
</dbReference>
<dbReference type="Pfam" id="PF00594">
    <property type="entry name" value="Gla"/>
    <property type="match status" value="1"/>
</dbReference>
<dbReference type="Pfam" id="PF00089">
    <property type="entry name" value="Trypsin"/>
    <property type="match status" value="1"/>
</dbReference>
<dbReference type="PIRSF" id="PIRSF001143">
    <property type="entry name" value="Factor_X"/>
    <property type="match status" value="1"/>
</dbReference>
<dbReference type="PRINTS" id="PR00722">
    <property type="entry name" value="CHYMOTRYPSIN"/>
</dbReference>
<dbReference type="PRINTS" id="PR00001">
    <property type="entry name" value="GLABLOOD"/>
</dbReference>
<dbReference type="SMART" id="SM00181">
    <property type="entry name" value="EGF"/>
    <property type="match status" value="2"/>
</dbReference>
<dbReference type="SMART" id="SM00179">
    <property type="entry name" value="EGF_CA"/>
    <property type="match status" value="1"/>
</dbReference>
<dbReference type="SMART" id="SM00069">
    <property type="entry name" value="GLA"/>
    <property type="match status" value="1"/>
</dbReference>
<dbReference type="SMART" id="SM00020">
    <property type="entry name" value="Tryp_SPc"/>
    <property type="match status" value="1"/>
</dbReference>
<dbReference type="SUPFAM" id="SSF57196">
    <property type="entry name" value="EGF/Laminin"/>
    <property type="match status" value="1"/>
</dbReference>
<dbReference type="SUPFAM" id="SSF57630">
    <property type="entry name" value="GLA-domain"/>
    <property type="match status" value="1"/>
</dbReference>
<dbReference type="SUPFAM" id="SSF50494">
    <property type="entry name" value="Trypsin-like serine proteases"/>
    <property type="match status" value="1"/>
</dbReference>
<dbReference type="PROSITE" id="PS00010">
    <property type="entry name" value="ASX_HYDROXYL"/>
    <property type="match status" value="1"/>
</dbReference>
<dbReference type="PROSITE" id="PS00022">
    <property type="entry name" value="EGF_1"/>
    <property type="match status" value="1"/>
</dbReference>
<dbReference type="PROSITE" id="PS01186">
    <property type="entry name" value="EGF_2"/>
    <property type="match status" value="2"/>
</dbReference>
<dbReference type="PROSITE" id="PS50026">
    <property type="entry name" value="EGF_3"/>
    <property type="match status" value="1"/>
</dbReference>
<dbReference type="PROSITE" id="PS01187">
    <property type="entry name" value="EGF_CA"/>
    <property type="match status" value="1"/>
</dbReference>
<dbReference type="PROSITE" id="PS00011">
    <property type="entry name" value="GLA_1"/>
    <property type="match status" value="1"/>
</dbReference>
<dbReference type="PROSITE" id="PS50998">
    <property type="entry name" value="GLA_2"/>
    <property type="match status" value="1"/>
</dbReference>
<dbReference type="PROSITE" id="PS50240">
    <property type="entry name" value="TRYPSIN_DOM"/>
    <property type="match status" value="1"/>
</dbReference>
<dbReference type="PROSITE" id="PS00134">
    <property type="entry name" value="TRYPSIN_HIS"/>
    <property type="match status" value="1"/>
</dbReference>
<dbReference type="PROSITE" id="PS00135">
    <property type="entry name" value="TRYPSIN_SER"/>
    <property type="match status" value="1"/>
</dbReference>
<evidence type="ECO:0000250" key="1"/>
<evidence type="ECO:0000250" key="2">
    <source>
        <dbReference type="UniProtKB" id="P00743"/>
    </source>
</evidence>
<evidence type="ECO:0000255" key="3"/>
<evidence type="ECO:0000255" key="4">
    <source>
        <dbReference type="PROSITE-ProRule" id="PRU00076"/>
    </source>
</evidence>
<evidence type="ECO:0000255" key="5">
    <source>
        <dbReference type="PROSITE-ProRule" id="PRU00274"/>
    </source>
</evidence>
<evidence type="ECO:0000255" key="6">
    <source>
        <dbReference type="PROSITE-ProRule" id="PRU00463"/>
    </source>
</evidence>
<evidence type="ECO:0000269" key="7">
    <source>
    </source>
</evidence>
<evidence type="ECO:0000269" key="8">
    <source>
    </source>
</evidence>
<evidence type="ECO:0000269" key="9">
    <source>
    </source>
</evidence>
<evidence type="ECO:0000269" key="10">
    <source>
    </source>
</evidence>
<evidence type="ECO:0000269" key="11">
    <source>
    </source>
</evidence>
<evidence type="ECO:0000269" key="12">
    <source>
    </source>
</evidence>
<evidence type="ECO:0000269" key="13">
    <source>
    </source>
</evidence>
<evidence type="ECO:0000269" key="14">
    <source>
    </source>
</evidence>
<evidence type="ECO:0000269" key="15">
    <source>
    </source>
</evidence>
<evidence type="ECO:0000269" key="16">
    <source>
    </source>
</evidence>
<evidence type="ECO:0000269" key="17">
    <source>
    </source>
</evidence>
<evidence type="ECO:0000269" key="18">
    <source>
    </source>
</evidence>
<evidence type="ECO:0000269" key="19">
    <source>
    </source>
</evidence>
<evidence type="ECO:0000269" key="20">
    <source>
    </source>
</evidence>
<evidence type="ECO:0000269" key="21">
    <source>
    </source>
</evidence>
<evidence type="ECO:0000269" key="22">
    <source>
    </source>
</evidence>
<evidence type="ECO:0000269" key="23">
    <source>
    </source>
</evidence>
<evidence type="ECO:0000269" key="24">
    <source>
    </source>
</evidence>
<evidence type="ECO:0000269" key="25">
    <source>
    </source>
</evidence>
<evidence type="ECO:0000269" key="26">
    <source>
    </source>
</evidence>
<evidence type="ECO:0000269" key="27">
    <source>
    </source>
</evidence>
<evidence type="ECO:0000269" key="28">
    <source>
    </source>
</evidence>
<evidence type="ECO:0000269" key="29">
    <source>
    </source>
</evidence>
<evidence type="ECO:0000269" key="30">
    <source>
    </source>
</evidence>
<evidence type="ECO:0000269" key="31">
    <source>
    </source>
</evidence>
<evidence type="ECO:0000269" key="32">
    <source>
    </source>
</evidence>
<evidence type="ECO:0000269" key="33">
    <source>
    </source>
</evidence>
<evidence type="ECO:0000269" key="34">
    <source>
    </source>
</evidence>
<evidence type="ECO:0000269" key="35">
    <source>
    </source>
</evidence>
<evidence type="ECO:0000269" key="36">
    <source>
    </source>
</evidence>
<evidence type="ECO:0000269" key="37">
    <source>
    </source>
</evidence>
<evidence type="ECO:0000269" key="38">
    <source>
    </source>
</evidence>
<evidence type="ECO:0000269" key="39">
    <source>
    </source>
</evidence>
<evidence type="ECO:0000269" key="40">
    <source>
    </source>
</evidence>
<evidence type="ECO:0000269" key="41">
    <source>
    </source>
</evidence>
<evidence type="ECO:0000269" key="42">
    <source>
    </source>
</evidence>
<evidence type="ECO:0000269" key="43">
    <source>
    </source>
</evidence>
<evidence type="ECO:0000269" key="44">
    <source>
    </source>
</evidence>
<evidence type="ECO:0000269" key="45">
    <source>
    </source>
</evidence>
<evidence type="ECO:0000269" key="46">
    <source>
    </source>
</evidence>
<evidence type="ECO:0000269" key="47">
    <source>
    </source>
</evidence>
<evidence type="ECO:0000269" key="48">
    <source>
    </source>
</evidence>
<evidence type="ECO:0000269" key="49">
    <source>
    </source>
</evidence>
<evidence type="ECO:0000269" key="50">
    <source>
    </source>
</evidence>
<evidence type="ECO:0000269" key="51">
    <source ref="3"/>
</evidence>
<evidence type="ECO:0000305" key="52"/>
<evidence type="ECO:0007829" key="53">
    <source>
        <dbReference type="PDB" id="1C5M"/>
    </source>
</evidence>
<evidence type="ECO:0007829" key="54">
    <source>
        <dbReference type="PDB" id="1HCG"/>
    </source>
</evidence>
<evidence type="ECO:0007829" key="55">
    <source>
        <dbReference type="PDB" id="1P0S"/>
    </source>
</evidence>
<evidence type="ECO:0007829" key="56">
    <source>
        <dbReference type="PDB" id="1XKA"/>
    </source>
</evidence>
<evidence type="ECO:0007829" key="57">
    <source>
        <dbReference type="PDB" id="1XKB"/>
    </source>
</evidence>
<evidence type="ECO:0007829" key="58">
    <source>
        <dbReference type="PDB" id="2JKH"/>
    </source>
</evidence>
<evidence type="ECO:0007829" key="59">
    <source>
        <dbReference type="PDB" id="2PR3"/>
    </source>
</evidence>
<evidence type="ECO:0007829" key="60">
    <source>
        <dbReference type="PDB" id="2VWO"/>
    </source>
</evidence>
<evidence type="ECO:0007829" key="61">
    <source>
        <dbReference type="PDB" id="3K9X"/>
    </source>
</evidence>
<evidence type="ECO:0007829" key="62">
    <source>
        <dbReference type="PDB" id="5VOF"/>
    </source>
</evidence>
<evidence type="ECO:0007829" key="63">
    <source>
        <dbReference type="PDB" id="6YYX"/>
    </source>
</evidence>